<keyword id="KW-0002">3D-structure</keyword>
<keyword id="KW-0903">Direct protein sequencing</keyword>
<keyword id="KW-1185">Reference proteome</keyword>
<keyword id="KW-0687">Ribonucleoprotein</keyword>
<keyword id="KW-0689">Ribosomal protein</keyword>
<keyword id="KW-0694">RNA-binding</keyword>
<keyword id="KW-0699">rRNA-binding</keyword>
<keyword id="KW-0820">tRNA-binding</keyword>
<sequence length="156" mass="18016">MARRRRAEVRQLQPDLVYGDVLVTAFINKIMRDGKKNLAARIFYDACKIIQEKTGQEPLKVFKQAVENVKPRMEVRSRRVGGANYQVPMEVSPRRQQSLALRWLVQAANQRPERRAAVRIAHELMDAAEGKGGAVKKKEDVERMAEANRAYAHYRW</sequence>
<protein>
    <recommendedName>
        <fullName evidence="3">Small ribosomal subunit protein uS7</fullName>
    </recommendedName>
    <alternativeName>
        <fullName>30S ribosomal protein S7</fullName>
    </alternativeName>
</protein>
<organism>
    <name type="scientific">Thermus thermophilus (strain ATCC 27634 / DSM 579 / HB8)</name>
    <dbReference type="NCBI Taxonomy" id="300852"/>
    <lineage>
        <taxon>Bacteria</taxon>
        <taxon>Thermotogati</taxon>
        <taxon>Deinococcota</taxon>
        <taxon>Deinococci</taxon>
        <taxon>Thermales</taxon>
        <taxon>Thermaceae</taxon>
        <taxon>Thermus</taxon>
    </lineage>
</organism>
<reference key="1">
    <citation type="journal article" date="1990" name="Nucleic Acids Res.">
        <title>Nucleotide sequence of the Thermus thermophilus HB8 rps12 and rps7 genes coding for the ribosomal proteins S12 and S7.</title>
        <authorList>
            <person name="Yakhnin A.V."/>
            <person name="Vorozheykina D.P."/>
            <person name="Matvienko N.I."/>
        </authorList>
    </citation>
    <scope>NUCLEOTIDE SEQUENCE [GENOMIC DNA]</scope>
</reference>
<reference key="2">
    <citation type="submission" date="2004-11" db="EMBL/GenBank/DDBJ databases">
        <title>Complete genome sequence of Thermus thermophilus HB8.</title>
        <authorList>
            <person name="Masui R."/>
            <person name="Kurokawa K."/>
            <person name="Nakagawa N."/>
            <person name="Tokunaga F."/>
            <person name="Koyama Y."/>
            <person name="Shibata T."/>
            <person name="Oshima T."/>
            <person name="Yokoyama S."/>
            <person name="Yasunaga T."/>
            <person name="Kuramitsu S."/>
        </authorList>
    </citation>
    <scope>NUCLEOTIDE SEQUENCE [LARGE SCALE GENOMIC DNA]</scope>
    <source>
        <strain>ATCC 27634 / DSM 579 / HB8</strain>
    </source>
</reference>
<reference key="3">
    <citation type="journal article" date="1994" name="Eur. J. Biochem.">
        <title>Purification and characterization of the 30S ribosomal proteins from the bacterium Thermus thermophilus.</title>
        <authorList>
            <person name="Tsiboli P."/>
            <person name="Herfurth E."/>
            <person name="Choli T."/>
        </authorList>
    </citation>
    <scope>PROTEIN SEQUENCE OF 2-50</scope>
</reference>
<reference key="4">
    <citation type="journal article" date="2005" name="Proteomics">
        <title>Extending ribosomal protein identifications to unsequenced bacterial strains using matrix-assisted laser desorption/ionization mass spectrometry.</title>
        <authorList>
            <person name="Suh M.-J."/>
            <person name="Hamburg D.M."/>
            <person name="Gregory S.T."/>
            <person name="Dahlberg A.E."/>
            <person name="Limbach P.A."/>
        </authorList>
    </citation>
    <scope>MASS SPECTROMETRY</scope>
    <source>
        <strain>ATCC 27634 / DSM 579 / HB8</strain>
    </source>
</reference>
<reference key="5">
    <citation type="journal article" date="1997" name="Structure">
        <title>The structure of ribosomal protein S7 at 1.9-A resolution reveals a beta-hairpin motif that binds double-stranded nucleic acids.</title>
        <authorList>
            <person name="Wimberly B.T."/>
            <person name="White S.W."/>
            <person name="Ramakrishnan V."/>
        </authorList>
    </citation>
    <scope>X-RAY CRYSTALLOGRAPHY (1.9 ANGSTROMS)</scope>
</reference>
<reference key="6">
    <citation type="journal article" date="1999" name="Nature">
        <title>Structure of a bacterial 30S ribosomal subunit at 5.5 A resolution.</title>
        <authorList>
            <person name="Clemons W.M. Jr."/>
            <person name="May J.L.C."/>
            <person name="Wimberly B.T."/>
            <person name="McCutcheon J.P."/>
            <person name="Capel M.S."/>
            <person name="Ramakrishnan V."/>
        </authorList>
    </citation>
    <scope>X-RAY CRYSTALLOGRAPHY (5.5 ANGSTROMS) OF THE 30S SUBUNIT</scope>
</reference>
<reference key="7">
    <citation type="journal article" date="1999" name="Proc. Natl. Acad. Sci. U.S.A.">
        <title>The small ribosomal subunit from Thermus thermophilus at 4.5 A resolution: pattern fittings and the identification of a functional site.</title>
        <authorList>
            <person name="Tocilj A."/>
            <person name="Schluenzen F."/>
            <person name="Janell D."/>
            <person name="Gluehmann M."/>
            <person name="Hansen H.A."/>
            <person name="Harms J."/>
            <person name="Bashan A."/>
            <person name="Bartels H."/>
            <person name="Agmon I."/>
            <person name="Franceschi F."/>
            <person name="Yonath A."/>
        </authorList>
    </citation>
    <scope>X-RAY CRYSTALLOGRAPHY (4.5 ANGSTROMS)</scope>
</reference>
<reference key="8">
    <citation type="journal article" date="2000" name="Nature">
        <title>Structure of the 30S ribosomal subunit.</title>
        <authorList>
            <person name="Wimberly B.T."/>
            <person name="Brodersen D.E."/>
            <person name="Clemons W.M. Jr."/>
            <person name="Morgan-Warren R.J."/>
            <person name="Carter A.P."/>
            <person name="Vonrhein C."/>
            <person name="Hartsch T."/>
            <person name="Ramakrishnan V."/>
        </authorList>
    </citation>
    <scope>X-RAY CRYSTALLOGRAPHY (3.05 ANGSTROMS) OF THE 30S SUBUNIT</scope>
</reference>
<reference key="9">
    <citation type="journal article" date="2000" name="Cell">
        <title>Structure of functionally activated small ribosomal subunit at 3.3 A resolution.</title>
        <authorList>
            <person name="Schluenzen F."/>
            <person name="Tocilj A."/>
            <person name="Zarivach R."/>
            <person name="Harms J."/>
            <person name="Gluehmann M."/>
            <person name="Janell D."/>
            <person name="Bashan A."/>
            <person name="Bartels H."/>
            <person name="Agmon I."/>
            <person name="Franceschi F."/>
            <person name="Yonath A."/>
        </authorList>
    </citation>
    <scope>X-RAY CRYSTALLOGRAPHY (3.3 ANGSTROMS) OF THE 30S SUBUNIT</scope>
</reference>
<reference key="10">
    <citation type="journal article" date="2000" name="Cell">
        <title>The structural basis for the action of the antibiotics tetracycline, pactamycin, and hygromycin B on the 30S ribosomal subunit.</title>
        <authorList>
            <person name="Brodersen D.E."/>
            <person name="Clemons W.M. Jr."/>
            <person name="Carter A.P."/>
            <person name="Morgan-Warren R.J."/>
            <person name="Wimberly B.T."/>
            <person name="Ramakrishnan V."/>
        </authorList>
    </citation>
    <scope>X-RAY CRYSTALLOGRAPHY (3.3 ANGSTROMS) OF THE 30S SUBUNIT</scope>
</reference>
<reference key="11">
    <citation type="journal article" date="2000" name="Nature">
        <title>Functional insights from the structure of the 30S ribosomal subunit and its interactions with antibiotics.</title>
        <authorList>
            <person name="Carter A.P."/>
            <person name="Clemons W.M. Jr."/>
            <person name="Brodersen D.E."/>
            <person name="Morgan-Warren R.J."/>
            <person name="Wimberly B.T."/>
            <person name="Ramakrishnan V."/>
        </authorList>
    </citation>
    <scope>X-RAY CRYSTALLOGRAPHY (3.0 ANGSTROMS) OF THE 30S SUBUNIT</scope>
</reference>
<reference key="12">
    <citation type="journal article" date="2001" name="Cell">
        <title>The path of messenger RNA through the ribosome.</title>
        <authorList>
            <person name="Yusupova G.Z."/>
            <person name="Yusupov M.M."/>
            <person name="Cate J.H.D."/>
            <person name="Noller H.F."/>
        </authorList>
    </citation>
    <scope>X-RAY CRYSTALLOGRAPHY (5.0 ANGSTROMS) OF THE RIBOSOME</scope>
</reference>
<reference key="13">
    <citation type="journal article" date="2001" name="EMBO J.">
        <title>Crystal structures of complexes of the small ribosomal subunit with tetracycline, edeine and IF3.</title>
        <authorList>
            <person name="Pioletti M."/>
            <person name="Schluenzen F."/>
            <person name="Harms J."/>
            <person name="Zarivach R."/>
            <person name="Gluehmann M."/>
            <person name="Avila H."/>
            <person name="Bashan A."/>
            <person name="Bartels H."/>
            <person name="Auerbach T."/>
            <person name="Jacobi C."/>
            <person name="Hartsch T."/>
            <person name="Yonath A."/>
            <person name="Franceschi F."/>
        </authorList>
    </citation>
    <scope>X-RAY CRYSTALLOGRAPHY (3.2 ANGSTROMS) OF THE 30S SUBUNIT</scope>
</reference>
<reference key="14">
    <citation type="journal article" date="2001" name="Science">
        <title>Crystal structure of an initiation factor bound to the 30S ribosomal subunit.</title>
        <authorList>
            <person name="Carter A.P."/>
            <person name="Clemons W.M. Jr."/>
            <person name="Brodersen D.E."/>
            <person name="Morgan-Warren R.J."/>
            <person name="Hartsch T."/>
            <person name="Wimberly B.T."/>
            <person name="Ramakrishnan V."/>
        </authorList>
    </citation>
    <scope>X-RAY CRYSTALLOGRAPHY (3.2 ANGSTROMS) OF THE 30S SUBUNIT</scope>
</reference>
<reference key="15">
    <citation type="journal article" date="2001" name="Science">
        <title>Crystal structure of the ribosome at 5.5 A resolution.</title>
        <authorList>
            <person name="Yusupov M.M."/>
            <person name="Yusupova G.Z."/>
            <person name="Baucom A."/>
            <person name="Lieberman K."/>
            <person name="Earnest T.N."/>
            <person name="Cate J.H.D."/>
            <person name="Noller H.F."/>
        </authorList>
    </citation>
    <scope>X-RAY CRYSTALLOGRAPHY (5.5 ANGSTROMS) OF THE RIBOSOME</scope>
</reference>
<reference key="16">
    <citation type="journal article" date="2001" name="Science">
        <title>Recognition of cognate transfer RNA by the 30S ribosomal subunit.</title>
        <authorList>
            <person name="Ogle J.M."/>
            <person name="Brodersen D.E."/>
            <person name="Clemons W.M. Jr."/>
            <person name="Tarry M.J."/>
            <person name="Carter A.P."/>
            <person name="Ramakrishnan V."/>
        </authorList>
    </citation>
    <scope>X-RAY CRYSTALLOGRAPHY (3.11 ANGSTROMS) OF THE 30S SUBUNIT</scope>
</reference>
<reference key="17">
    <citation type="journal article" date="2002" name="J. Mol. Biol.">
        <title>Crystal structure of the 30S ribosomal subunit from Thermus thermophilus: structure of the proteins and their interactions with 16S RNA.</title>
        <authorList>
            <person name="Brodersen D.E."/>
            <person name="Clemons W.M. Jr."/>
            <person name="Carter A.P."/>
            <person name="Wimberly B.T."/>
            <person name="Ramakrishnan V."/>
        </authorList>
    </citation>
    <scope>X-RAY CRYSTALLOGRAPHY (3.05 ANGSTROMS) OF THE 30S SUBUNIT</scope>
</reference>
<reference key="18">
    <citation type="journal article" date="2005" name="Mol. Cell">
        <title>Interaction of Era with the 30S ribosomal subunit implications for 30S subunit assembly.</title>
        <authorList>
            <person name="Sharma M.R."/>
            <person name="Barat C."/>
            <person name="Wilson D.N."/>
            <person name="Booth T.M."/>
            <person name="Kawazoe M."/>
            <person name="Hori-Takemoto C."/>
            <person name="Shirouzu M."/>
            <person name="Yokoyama S."/>
            <person name="Fucini P."/>
            <person name="Agrawal R.K."/>
        </authorList>
    </citation>
    <scope>STRUCTURE BY ELECTRON MICROSCOPY (13.50 ANGSTROMS)</scope>
    <scope>INTERACTION WITH ERA</scope>
</reference>
<reference key="19">
    <citation type="journal article" date="2005" name="Cell">
        <title>Crystal structures of the ribosome in complex with release factors RF1 and RF2 bound to a cognate stop codon.</title>
        <authorList>
            <person name="Petry S."/>
            <person name="Brodersen D.E."/>
            <person name="Murphy F.V."/>
            <person name="Dunham C.M."/>
            <person name="Selmer M."/>
            <person name="Tarry M.J."/>
            <person name="Kelley A.C."/>
            <person name="Ramakrishnan V."/>
        </authorList>
    </citation>
    <scope>X-RAY CRYSTALLOGRAPHY (5.90 ANGSTROMS) OF 70S RIBOSOME IN COMPLEX WITH RF1 OR RF2</scope>
    <scope>SUBUNIT</scope>
</reference>
<reference key="20">
    <citation type="journal article" date="2008" name="Science">
        <title>Insights into translational termination from the structure of RF2 bound to the ribosome.</title>
        <authorList>
            <person name="Weixlbaumer A."/>
            <person name="Jin H."/>
            <person name="Neubauer C."/>
            <person name="Voorhees R.M."/>
            <person name="Petry S."/>
            <person name="Kelley A.C."/>
            <person name="Ramakrishnan V."/>
        </authorList>
    </citation>
    <scope>X-RAY CRYSTALLOGRAPHY (3.45 ANGSTROMS) OF 70S RIBOSOME IN COMPLEX WITH RF2</scope>
    <scope>SUBUNIT</scope>
</reference>
<reference key="21">
    <citation type="journal article" date="2010" name="Proc. Natl. Acad. Sci. U.S.A.">
        <title>Structure of the 70S ribosome bound to release factor 2 and a substrate analog provides insights into catalysis of peptide release.</title>
        <authorList>
            <person name="Jin H."/>
            <person name="Kelley A.C."/>
            <person name="Loakes D."/>
            <person name="Ramakrishnan V."/>
        </authorList>
    </citation>
    <scope>X-RAY CRYSTALLOGRAPHY (3.10 ANGSTROMS) OF 70S RIBOSOME IN COMPLEX WITH RF2</scope>
    <scope>SUBUNIT</scope>
</reference>
<proteinExistence type="evidence at protein level"/>
<gene>
    <name type="primary">rpsG</name>
    <name type="synonym">rps7</name>
    <name type="ordered locus">TTHA1696</name>
</gene>
<dbReference type="EMBL" id="X52165">
    <property type="protein sequence ID" value="CAA36419.1"/>
    <property type="molecule type" value="Genomic_DNA"/>
</dbReference>
<dbReference type="EMBL" id="AP008226">
    <property type="protein sequence ID" value="BAD71519.1"/>
    <property type="molecule type" value="Genomic_DNA"/>
</dbReference>
<dbReference type="RefSeq" id="WP_008633429.1">
    <property type="nucleotide sequence ID" value="NC_006461.1"/>
</dbReference>
<dbReference type="RefSeq" id="YP_144962.1">
    <property type="nucleotide sequence ID" value="NC_006461.1"/>
</dbReference>
<dbReference type="PDB" id="1DV4">
    <property type="method" value="X-ray"/>
    <property type="resolution" value="4.50 A"/>
    <property type="chains" value="G=12-146"/>
</dbReference>
<dbReference type="PDB" id="1FJG">
    <property type="method" value="X-ray"/>
    <property type="resolution" value="3.00 A"/>
    <property type="chains" value="G=1-156"/>
</dbReference>
<dbReference type="PDB" id="1FKA">
    <property type="method" value="X-ray"/>
    <property type="resolution" value="3.30 A"/>
    <property type="chains" value="G=1-151"/>
</dbReference>
<dbReference type="PDB" id="1HNW">
    <property type="method" value="X-ray"/>
    <property type="resolution" value="3.40 A"/>
    <property type="chains" value="G=1-156"/>
</dbReference>
<dbReference type="PDB" id="1HNX">
    <property type="method" value="X-ray"/>
    <property type="resolution" value="3.40 A"/>
    <property type="chains" value="G=1-156"/>
</dbReference>
<dbReference type="PDB" id="1HNZ">
    <property type="method" value="X-ray"/>
    <property type="resolution" value="3.30 A"/>
    <property type="chains" value="G=1-156"/>
</dbReference>
<dbReference type="PDB" id="1HR0">
    <property type="method" value="X-ray"/>
    <property type="resolution" value="3.20 A"/>
    <property type="chains" value="G=1-156"/>
</dbReference>
<dbReference type="PDB" id="1I94">
    <property type="method" value="X-ray"/>
    <property type="resolution" value="3.20 A"/>
    <property type="chains" value="G=2-156"/>
</dbReference>
<dbReference type="PDB" id="1I95">
    <property type="method" value="X-ray"/>
    <property type="resolution" value="4.50 A"/>
    <property type="chains" value="G=2-156"/>
</dbReference>
<dbReference type="PDB" id="1I96">
    <property type="method" value="X-ray"/>
    <property type="resolution" value="4.20 A"/>
    <property type="chains" value="G=2-156"/>
</dbReference>
<dbReference type="PDB" id="1I97">
    <property type="method" value="X-ray"/>
    <property type="resolution" value="4.50 A"/>
    <property type="chains" value="G=2-156"/>
</dbReference>
<dbReference type="PDB" id="1IBK">
    <property type="method" value="X-ray"/>
    <property type="resolution" value="3.31 A"/>
    <property type="chains" value="G=1-156"/>
</dbReference>
<dbReference type="PDB" id="1IBL">
    <property type="method" value="X-ray"/>
    <property type="resolution" value="3.11 A"/>
    <property type="chains" value="G=1-156"/>
</dbReference>
<dbReference type="PDB" id="1IBM">
    <property type="method" value="X-ray"/>
    <property type="resolution" value="3.31 A"/>
    <property type="chains" value="G=1-156"/>
</dbReference>
<dbReference type="PDB" id="1J5E">
    <property type="method" value="X-ray"/>
    <property type="resolution" value="3.05 A"/>
    <property type="chains" value="G=2-156"/>
</dbReference>
<dbReference type="PDB" id="1JGO">
    <property type="method" value="X-ray"/>
    <property type="resolution" value="5.60 A"/>
    <property type="chains" value="J=1-156"/>
</dbReference>
<dbReference type="PDB" id="1JGP">
    <property type="method" value="X-ray"/>
    <property type="resolution" value="7.00 A"/>
    <property type="chains" value="J=1-156"/>
</dbReference>
<dbReference type="PDB" id="1JGQ">
    <property type="method" value="X-ray"/>
    <property type="resolution" value="5.00 A"/>
    <property type="chains" value="J=1-156"/>
</dbReference>
<dbReference type="PDB" id="1ML5">
    <property type="method" value="EM"/>
    <property type="resolution" value="14.00 A"/>
    <property type="chains" value="J=1-156"/>
</dbReference>
<dbReference type="PDB" id="1N32">
    <property type="method" value="X-ray"/>
    <property type="resolution" value="3.00 A"/>
    <property type="chains" value="G=2-156"/>
</dbReference>
<dbReference type="PDB" id="1N33">
    <property type="method" value="X-ray"/>
    <property type="resolution" value="3.35 A"/>
    <property type="chains" value="G=2-156"/>
</dbReference>
<dbReference type="PDB" id="1N34">
    <property type="method" value="X-ray"/>
    <property type="resolution" value="3.80 A"/>
    <property type="chains" value="G=2-156"/>
</dbReference>
<dbReference type="PDB" id="1N36">
    <property type="method" value="X-ray"/>
    <property type="resolution" value="3.65 A"/>
    <property type="chains" value="G=2-156"/>
</dbReference>
<dbReference type="PDB" id="1QD7">
    <property type="method" value="X-ray"/>
    <property type="resolution" value="5.50 A"/>
    <property type="chains" value="F=12-146"/>
</dbReference>
<dbReference type="PDB" id="1RSS">
    <property type="method" value="X-ray"/>
    <property type="resolution" value="1.90 A"/>
    <property type="chains" value="A=7-156"/>
</dbReference>
<dbReference type="PDB" id="1VVJ">
    <property type="method" value="X-ray"/>
    <property type="resolution" value="3.44 A"/>
    <property type="chains" value="QG/XG=1-156"/>
</dbReference>
<dbReference type="PDB" id="1VY4">
    <property type="method" value="X-ray"/>
    <property type="resolution" value="2.60 A"/>
    <property type="chains" value="AG/CG=1-156"/>
</dbReference>
<dbReference type="PDB" id="1VY5">
    <property type="method" value="X-ray"/>
    <property type="resolution" value="2.55 A"/>
    <property type="chains" value="AG/CG=1-156"/>
</dbReference>
<dbReference type="PDB" id="1VY6">
    <property type="method" value="X-ray"/>
    <property type="resolution" value="2.90 A"/>
    <property type="chains" value="AG/CG=1-156"/>
</dbReference>
<dbReference type="PDB" id="1VY7">
    <property type="method" value="X-ray"/>
    <property type="resolution" value="2.80 A"/>
    <property type="chains" value="AG/CG=1-156"/>
</dbReference>
<dbReference type="PDB" id="1X18">
    <property type="method" value="EM"/>
    <property type="resolution" value="13.50 A"/>
    <property type="chains" value="F=2-156"/>
</dbReference>
<dbReference type="PDB" id="1XMO">
    <property type="method" value="X-ray"/>
    <property type="resolution" value="3.25 A"/>
    <property type="chains" value="G=1-156"/>
</dbReference>
<dbReference type="PDB" id="1XMQ">
    <property type="method" value="X-ray"/>
    <property type="resolution" value="3.00 A"/>
    <property type="chains" value="G=1-156"/>
</dbReference>
<dbReference type="PDB" id="1XNQ">
    <property type="method" value="X-ray"/>
    <property type="resolution" value="3.05 A"/>
    <property type="chains" value="G=1-156"/>
</dbReference>
<dbReference type="PDB" id="1XNR">
    <property type="method" value="X-ray"/>
    <property type="resolution" value="3.10 A"/>
    <property type="chains" value="G=1-156"/>
</dbReference>
<dbReference type="PDB" id="2E5L">
    <property type="method" value="X-ray"/>
    <property type="resolution" value="3.30 A"/>
    <property type="chains" value="G=2-156"/>
</dbReference>
<dbReference type="PDB" id="2F4V">
    <property type="method" value="X-ray"/>
    <property type="resolution" value="3.80 A"/>
    <property type="chains" value="G=1-156"/>
</dbReference>
<dbReference type="PDB" id="2HHH">
    <property type="method" value="X-ray"/>
    <property type="resolution" value="3.35 A"/>
    <property type="chains" value="G=1-156"/>
</dbReference>
<dbReference type="PDB" id="2UU9">
    <property type="method" value="X-ray"/>
    <property type="resolution" value="3.10 A"/>
    <property type="chains" value="G=2-156"/>
</dbReference>
<dbReference type="PDB" id="2UUA">
    <property type="method" value="X-ray"/>
    <property type="resolution" value="2.90 A"/>
    <property type="chains" value="G=2-156"/>
</dbReference>
<dbReference type="PDB" id="2UUB">
    <property type="method" value="X-ray"/>
    <property type="resolution" value="2.80 A"/>
    <property type="chains" value="G=2-156"/>
</dbReference>
<dbReference type="PDB" id="2UUC">
    <property type="method" value="X-ray"/>
    <property type="resolution" value="3.10 A"/>
    <property type="chains" value="G=2-156"/>
</dbReference>
<dbReference type="PDB" id="2UXB">
    <property type="method" value="X-ray"/>
    <property type="resolution" value="3.10 A"/>
    <property type="chains" value="G=2-156"/>
</dbReference>
<dbReference type="PDB" id="2UXC">
    <property type="method" value="X-ray"/>
    <property type="resolution" value="2.90 A"/>
    <property type="chains" value="G=2-156"/>
</dbReference>
<dbReference type="PDB" id="2UXD">
    <property type="method" value="X-ray"/>
    <property type="resolution" value="3.20 A"/>
    <property type="chains" value="G=2-156"/>
</dbReference>
<dbReference type="PDB" id="2VQE">
    <property type="method" value="X-ray"/>
    <property type="resolution" value="2.50 A"/>
    <property type="chains" value="G=1-156"/>
</dbReference>
<dbReference type="PDB" id="2VQF">
    <property type="method" value="X-ray"/>
    <property type="resolution" value="2.90 A"/>
    <property type="chains" value="G=1-156"/>
</dbReference>
<dbReference type="PDB" id="2ZM6">
    <property type="method" value="X-ray"/>
    <property type="resolution" value="3.30 A"/>
    <property type="chains" value="G=2-156"/>
</dbReference>
<dbReference type="PDB" id="3OTO">
    <property type="method" value="X-ray"/>
    <property type="resolution" value="3.69 A"/>
    <property type="chains" value="G=1-156"/>
</dbReference>
<dbReference type="PDB" id="3T1H">
    <property type="method" value="X-ray"/>
    <property type="resolution" value="3.11 A"/>
    <property type="chains" value="G=1-156"/>
</dbReference>
<dbReference type="PDB" id="3T1Y">
    <property type="method" value="X-ray"/>
    <property type="resolution" value="2.80 A"/>
    <property type="chains" value="G=1-156"/>
</dbReference>
<dbReference type="PDB" id="4AQY">
    <property type="method" value="X-ray"/>
    <property type="resolution" value="3.50 A"/>
    <property type="chains" value="G=2-156"/>
</dbReference>
<dbReference type="PDB" id="4B3M">
    <property type="method" value="X-ray"/>
    <property type="resolution" value="2.90 A"/>
    <property type="chains" value="G=2-156"/>
</dbReference>
<dbReference type="PDB" id="4B3R">
    <property type="method" value="X-ray"/>
    <property type="resolution" value="3.00 A"/>
    <property type="chains" value="G=2-156"/>
</dbReference>
<dbReference type="PDB" id="4B3S">
    <property type="method" value="X-ray"/>
    <property type="resolution" value="3.15 A"/>
    <property type="chains" value="G=2-156"/>
</dbReference>
<dbReference type="PDB" id="4B3T">
    <property type="method" value="X-ray"/>
    <property type="resolution" value="3.00 A"/>
    <property type="chains" value="G=2-156"/>
</dbReference>
<dbReference type="PDB" id="4DR1">
    <property type="method" value="X-ray"/>
    <property type="resolution" value="3.60 A"/>
    <property type="chains" value="G=1-156"/>
</dbReference>
<dbReference type="PDB" id="4DR2">
    <property type="method" value="X-ray"/>
    <property type="resolution" value="3.25 A"/>
    <property type="chains" value="G=1-156"/>
</dbReference>
<dbReference type="PDB" id="4DR3">
    <property type="method" value="X-ray"/>
    <property type="resolution" value="3.35 A"/>
    <property type="chains" value="G=1-156"/>
</dbReference>
<dbReference type="PDB" id="4DR4">
    <property type="method" value="X-ray"/>
    <property type="resolution" value="3.97 A"/>
    <property type="chains" value="G=1-156"/>
</dbReference>
<dbReference type="PDB" id="4DR5">
    <property type="method" value="X-ray"/>
    <property type="resolution" value="3.45 A"/>
    <property type="chains" value="G=1-156"/>
</dbReference>
<dbReference type="PDB" id="4DR6">
    <property type="method" value="X-ray"/>
    <property type="resolution" value="3.30 A"/>
    <property type="chains" value="G=1-156"/>
</dbReference>
<dbReference type="PDB" id="4DR7">
    <property type="method" value="X-ray"/>
    <property type="resolution" value="3.75 A"/>
    <property type="chains" value="G=1-156"/>
</dbReference>
<dbReference type="PDB" id="4DUY">
    <property type="method" value="X-ray"/>
    <property type="resolution" value="3.39 A"/>
    <property type="chains" value="G=1-156"/>
</dbReference>
<dbReference type="PDB" id="4DUZ">
    <property type="method" value="X-ray"/>
    <property type="resolution" value="3.65 A"/>
    <property type="chains" value="G=1-156"/>
</dbReference>
<dbReference type="PDB" id="4DV0">
    <property type="method" value="X-ray"/>
    <property type="resolution" value="3.85 A"/>
    <property type="chains" value="G=1-156"/>
</dbReference>
<dbReference type="PDB" id="4DV1">
    <property type="method" value="X-ray"/>
    <property type="resolution" value="3.85 A"/>
    <property type="chains" value="G=1-156"/>
</dbReference>
<dbReference type="PDB" id="4DV2">
    <property type="method" value="X-ray"/>
    <property type="resolution" value="3.65 A"/>
    <property type="chains" value="G=1-156"/>
</dbReference>
<dbReference type="PDB" id="4DV3">
    <property type="method" value="X-ray"/>
    <property type="resolution" value="3.55 A"/>
    <property type="chains" value="G=1-156"/>
</dbReference>
<dbReference type="PDB" id="4DV4">
    <property type="method" value="X-ray"/>
    <property type="resolution" value="3.65 A"/>
    <property type="chains" value="G=1-156"/>
</dbReference>
<dbReference type="PDB" id="4DV5">
    <property type="method" value="X-ray"/>
    <property type="resolution" value="3.68 A"/>
    <property type="chains" value="G=1-156"/>
</dbReference>
<dbReference type="PDB" id="4DV6">
    <property type="method" value="X-ray"/>
    <property type="resolution" value="3.30 A"/>
    <property type="chains" value="G=1-156"/>
</dbReference>
<dbReference type="PDB" id="4DV7">
    <property type="method" value="X-ray"/>
    <property type="resolution" value="3.29 A"/>
    <property type="chains" value="G=1-156"/>
</dbReference>
<dbReference type="PDB" id="4GKJ">
    <property type="method" value="X-ray"/>
    <property type="resolution" value="3.30 A"/>
    <property type="chains" value="G=2-156"/>
</dbReference>
<dbReference type="PDB" id="4GKK">
    <property type="method" value="X-ray"/>
    <property type="resolution" value="3.20 A"/>
    <property type="chains" value="G=2-156"/>
</dbReference>
<dbReference type="PDB" id="4JI0">
    <property type="method" value="X-ray"/>
    <property type="resolution" value="3.49 A"/>
    <property type="chains" value="G=1-156"/>
</dbReference>
<dbReference type="PDB" id="4JI1">
    <property type="method" value="X-ray"/>
    <property type="resolution" value="3.14 A"/>
    <property type="chains" value="G=1-156"/>
</dbReference>
<dbReference type="PDB" id="4JI2">
    <property type="method" value="X-ray"/>
    <property type="resolution" value="3.64 A"/>
    <property type="chains" value="G=1-156"/>
</dbReference>
<dbReference type="PDB" id="4JI3">
    <property type="method" value="X-ray"/>
    <property type="resolution" value="3.35 A"/>
    <property type="chains" value="G=1-156"/>
</dbReference>
<dbReference type="PDB" id="4JI4">
    <property type="method" value="X-ray"/>
    <property type="resolution" value="3.69 A"/>
    <property type="chains" value="G=1-156"/>
</dbReference>
<dbReference type="PDB" id="4JI5">
    <property type="method" value="X-ray"/>
    <property type="resolution" value="3.85 A"/>
    <property type="chains" value="G=1-156"/>
</dbReference>
<dbReference type="PDB" id="4JI6">
    <property type="method" value="X-ray"/>
    <property type="resolution" value="3.55 A"/>
    <property type="chains" value="G=1-156"/>
</dbReference>
<dbReference type="PDB" id="4JI7">
    <property type="method" value="X-ray"/>
    <property type="resolution" value="3.50 A"/>
    <property type="chains" value="G=1-156"/>
</dbReference>
<dbReference type="PDB" id="4JI8">
    <property type="method" value="X-ray"/>
    <property type="resolution" value="3.74 A"/>
    <property type="chains" value="G=1-156"/>
</dbReference>
<dbReference type="PDB" id="4JV5">
    <property type="method" value="X-ray"/>
    <property type="resolution" value="3.16 A"/>
    <property type="chains" value="G=2-156"/>
</dbReference>
<dbReference type="PDB" id="4JYA">
    <property type="method" value="X-ray"/>
    <property type="resolution" value="3.10 A"/>
    <property type="chains" value="G=2-156"/>
</dbReference>
<dbReference type="PDB" id="4K0K">
    <property type="method" value="X-ray"/>
    <property type="resolution" value="3.40 A"/>
    <property type="chains" value="G=2-156"/>
</dbReference>
<dbReference type="PDB" id="4KHP">
    <property type="method" value="X-ray"/>
    <property type="resolution" value="3.10 A"/>
    <property type="chains" value="G=2-156"/>
</dbReference>
<dbReference type="PDB" id="4L47">
    <property type="method" value="X-ray"/>
    <property type="resolution" value="3.22 A"/>
    <property type="chains" value="QG/XG=1-156"/>
</dbReference>
<dbReference type="PDB" id="4L71">
    <property type="method" value="X-ray"/>
    <property type="resolution" value="3.90 A"/>
    <property type="chains" value="QG/XG=1-156"/>
</dbReference>
<dbReference type="PDB" id="4LEL">
    <property type="method" value="X-ray"/>
    <property type="resolution" value="3.90 A"/>
    <property type="chains" value="QG/XG=1-156"/>
</dbReference>
<dbReference type="PDB" id="4LF4">
    <property type="method" value="X-ray"/>
    <property type="resolution" value="3.34 A"/>
    <property type="chains" value="G=1-156"/>
</dbReference>
<dbReference type="PDB" id="4LF5">
    <property type="method" value="X-ray"/>
    <property type="resolution" value="3.75 A"/>
    <property type="chains" value="G=1-156"/>
</dbReference>
<dbReference type="PDB" id="4LF6">
    <property type="method" value="X-ray"/>
    <property type="resolution" value="3.31 A"/>
    <property type="chains" value="G=1-156"/>
</dbReference>
<dbReference type="PDB" id="4LF7">
    <property type="method" value="X-ray"/>
    <property type="resolution" value="3.15 A"/>
    <property type="chains" value="G=1-156"/>
</dbReference>
<dbReference type="PDB" id="4LF8">
    <property type="method" value="X-ray"/>
    <property type="resolution" value="3.15 A"/>
    <property type="chains" value="G=1-156"/>
</dbReference>
<dbReference type="PDB" id="4LF9">
    <property type="method" value="X-ray"/>
    <property type="resolution" value="3.28 A"/>
    <property type="chains" value="G=1-156"/>
</dbReference>
<dbReference type="PDB" id="4LFA">
    <property type="method" value="X-ray"/>
    <property type="resolution" value="3.65 A"/>
    <property type="chains" value="G=1-156"/>
</dbReference>
<dbReference type="PDB" id="4LFB">
    <property type="method" value="X-ray"/>
    <property type="resolution" value="3.01 A"/>
    <property type="chains" value="G=1-156"/>
</dbReference>
<dbReference type="PDB" id="4LFC">
    <property type="method" value="X-ray"/>
    <property type="resolution" value="3.60 A"/>
    <property type="chains" value="G=1-156"/>
</dbReference>
<dbReference type="PDB" id="4LFZ">
    <property type="method" value="X-ray"/>
    <property type="resolution" value="3.92 A"/>
    <property type="chains" value="QG/XG=1-156"/>
</dbReference>
<dbReference type="PDB" id="4LNT">
    <property type="method" value="X-ray"/>
    <property type="resolution" value="2.94 A"/>
    <property type="chains" value="QG/XG=1-156"/>
</dbReference>
<dbReference type="PDB" id="4LSK">
    <property type="method" value="X-ray"/>
    <property type="resolution" value="3.48 A"/>
    <property type="chains" value="QG/XG=1-156"/>
</dbReference>
<dbReference type="PDB" id="4LT8">
    <property type="method" value="X-ray"/>
    <property type="resolution" value="3.14 A"/>
    <property type="chains" value="QG/XG=1-156"/>
</dbReference>
<dbReference type="PDB" id="4NXM">
    <property type="method" value="X-ray"/>
    <property type="resolution" value="3.65 A"/>
    <property type="chains" value="G=1-156"/>
</dbReference>
<dbReference type="PDB" id="4NXN">
    <property type="method" value="X-ray"/>
    <property type="resolution" value="3.54 A"/>
    <property type="chains" value="G=1-156"/>
</dbReference>
<dbReference type="PDB" id="4OX9">
    <property type="method" value="X-ray"/>
    <property type="resolution" value="3.80 A"/>
    <property type="chains" value="G=2-156"/>
</dbReference>
<dbReference type="PDB" id="4P6F">
    <property type="method" value="X-ray"/>
    <property type="resolution" value="3.60 A"/>
    <property type="chains" value="QG/XG=1-156"/>
</dbReference>
<dbReference type="PDB" id="4P70">
    <property type="method" value="X-ray"/>
    <property type="resolution" value="3.68 A"/>
    <property type="chains" value="QG/XG=1-156"/>
</dbReference>
<dbReference type="PDB" id="4TUA">
    <property type="method" value="X-ray"/>
    <property type="resolution" value="3.60 A"/>
    <property type="chains" value="QG/XG=1-156"/>
</dbReference>
<dbReference type="PDB" id="4TUB">
    <property type="method" value="X-ray"/>
    <property type="resolution" value="3.60 A"/>
    <property type="chains" value="QG/XG=1-156"/>
</dbReference>
<dbReference type="PDB" id="4TUC">
    <property type="method" value="X-ray"/>
    <property type="resolution" value="3.60 A"/>
    <property type="chains" value="QG/XG=1-156"/>
</dbReference>
<dbReference type="PDB" id="4TUD">
    <property type="method" value="X-ray"/>
    <property type="resolution" value="3.60 A"/>
    <property type="chains" value="QG/XG=1-156"/>
</dbReference>
<dbReference type="PDB" id="4TUE">
    <property type="method" value="X-ray"/>
    <property type="resolution" value="3.50 A"/>
    <property type="chains" value="QG/XG=1-156"/>
</dbReference>
<dbReference type="PDB" id="4V42">
    <property type="method" value="X-ray"/>
    <property type="resolution" value="5.50 A"/>
    <property type="chains" value="AJ=1-156"/>
</dbReference>
<dbReference type="PDB" id="4V49">
    <property type="method" value="X-ray"/>
    <property type="resolution" value="8.70 A"/>
    <property type="chains" value="G=2-156"/>
</dbReference>
<dbReference type="PDB" id="4V4A">
    <property type="method" value="X-ray"/>
    <property type="resolution" value="9.50 A"/>
    <property type="chains" value="G=2-156"/>
</dbReference>
<dbReference type="PDB" id="4V4I">
    <property type="method" value="X-ray"/>
    <property type="resolution" value="3.71 A"/>
    <property type="chains" value="h=-"/>
</dbReference>
<dbReference type="PDB" id="4V4P">
    <property type="method" value="X-ray"/>
    <property type="resolution" value="5.50 A"/>
    <property type="chains" value="BJ=1-156"/>
</dbReference>
<dbReference type="PDB" id="4V4R">
    <property type="method" value="X-ray"/>
    <property type="resolution" value="5.90 A"/>
    <property type="chains" value="AG=1-156"/>
</dbReference>
<dbReference type="PDB" id="4V4S">
    <property type="method" value="X-ray"/>
    <property type="resolution" value="6.76 A"/>
    <property type="chains" value="AG=1-156"/>
</dbReference>
<dbReference type="PDB" id="4V4T">
    <property type="method" value="X-ray"/>
    <property type="resolution" value="6.46 A"/>
    <property type="chains" value="AG=1-156"/>
</dbReference>
<dbReference type="PDB" id="4V4X">
    <property type="method" value="X-ray"/>
    <property type="resolution" value="5.00 A"/>
    <property type="chains" value="AJ=1-156"/>
</dbReference>
<dbReference type="PDB" id="4V4Y">
    <property type="method" value="X-ray"/>
    <property type="resolution" value="5.50 A"/>
    <property type="chains" value="AJ=1-156"/>
</dbReference>
<dbReference type="PDB" id="4V4Z">
    <property type="method" value="X-ray"/>
    <property type="resolution" value="4.51 A"/>
    <property type="chains" value="AJ=1-156"/>
</dbReference>
<dbReference type="PDB" id="4V51">
    <property type="method" value="X-ray"/>
    <property type="resolution" value="2.80 A"/>
    <property type="chains" value="AG/CG=2-156"/>
</dbReference>
<dbReference type="PDB" id="4V5A">
    <property type="method" value="X-ray"/>
    <property type="resolution" value="3.50 A"/>
    <property type="chains" value="AG/CG=2-156"/>
</dbReference>
<dbReference type="PDB" id="4V5C">
    <property type="method" value="X-ray"/>
    <property type="resolution" value="3.30 A"/>
    <property type="chains" value="AG/CG=1-156"/>
</dbReference>
<dbReference type="PDB" id="4V5D">
    <property type="method" value="X-ray"/>
    <property type="resolution" value="3.50 A"/>
    <property type="chains" value="AG/CG=1-156"/>
</dbReference>
<dbReference type="PDB" id="4V5E">
    <property type="method" value="X-ray"/>
    <property type="resolution" value="3.45 A"/>
    <property type="chains" value="AG/CG=1-156"/>
</dbReference>
<dbReference type="PDB" id="4V5F">
    <property type="method" value="X-ray"/>
    <property type="resolution" value="3.60 A"/>
    <property type="chains" value="AG/CG=1-156"/>
</dbReference>
<dbReference type="PDB" id="4V5G">
    <property type="method" value="X-ray"/>
    <property type="resolution" value="3.60 A"/>
    <property type="chains" value="AG/CG=1-156"/>
</dbReference>
<dbReference type="PDB" id="4V5J">
    <property type="method" value="X-ray"/>
    <property type="resolution" value="3.10 A"/>
    <property type="chains" value="AG/CG=1-156"/>
</dbReference>
<dbReference type="PDB" id="4V5K">
    <property type="method" value="X-ray"/>
    <property type="resolution" value="3.20 A"/>
    <property type="chains" value="AG/CG=1-156"/>
</dbReference>
<dbReference type="PDB" id="4V5L">
    <property type="method" value="X-ray"/>
    <property type="resolution" value="3.10 A"/>
    <property type="chains" value="AG=1-156"/>
</dbReference>
<dbReference type="PDB" id="4V5M">
    <property type="method" value="EM"/>
    <property type="resolution" value="7.80 A"/>
    <property type="chains" value="AG=1-156"/>
</dbReference>
<dbReference type="PDB" id="4V5N">
    <property type="method" value="EM"/>
    <property type="resolution" value="7.60 A"/>
    <property type="chains" value="AG=1-156"/>
</dbReference>
<dbReference type="PDB" id="4V5P">
    <property type="method" value="X-ray"/>
    <property type="resolution" value="3.10 A"/>
    <property type="chains" value="AG/CG=1-156"/>
</dbReference>
<dbReference type="PDB" id="4V5Q">
    <property type="method" value="X-ray"/>
    <property type="resolution" value="3.10 A"/>
    <property type="chains" value="AG/CG=1-156"/>
</dbReference>
<dbReference type="PDB" id="4V5R">
    <property type="method" value="X-ray"/>
    <property type="resolution" value="3.10 A"/>
    <property type="chains" value="AG/CG=1-156"/>
</dbReference>
<dbReference type="PDB" id="4V5S">
    <property type="method" value="X-ray"/>
    <property type="resolution" value="3.10 A"/>
    <property type="chains" value="AG/CG=1-156"/>
</dbReference>
<dbReference type="PDB" id="4V68">
    <property type="method" value="EM"/>
    <property type="resolution" value="6.40 A"/>
    <property type="chains" value="AG=2-156"/>
</dbReference>
<dbReference type="PDB" id="4V6A">
    <property type="method" value="X-ray"/>
    <property type="resolution" value="3.10 A"/>
    <property type="chains" value="AG/CG=1-156"/>
</dbReference>
<dbReference type="PDB" id="4V6F">
    <property type="method" value="X-ray"/>
    <property type="resolution" value="3.10 A"/>
    <property type="chains" value="BJ/CJ=1-156"/>
</dbReference>
<dbReference type="PDB" id="4V6G">
    <property type="method" value="X-ray"/>
    <property type="resolution" value="3.50 A"/>
    <property type="chains" value="AJ/CJ=1-156"/>
</dbReference>
<dbReference type="PDB" id="4V7J">
    <property type="method" value="X-ray"/>
    <property type="resolution" value="3.30 A"/>
    <property type="chains" value="Ag/Bg=1-156"/>
</dbReference>
<dbReference type="PDB" id="4V7K">
    <property type="method" value="X-ray"/>
    <property type="resolution" value="3.60 A"/>
    <property type="chains" value="Ag/Bg=1-156"/>
</dbReference>
<dbReference type="PDB" id="4V7L">
    <property type="method" value="X-ray"/>
    <property type="resolution" value="3.00 A"/>
    <property type="chains" value="AG/CG=1-156"/>
</dbReference>
<dbReference type="PDB" id="4V7M">
    <property type="method" value="X-ray"/>
    <property type="resolution" value="3.45 A"/>
    <property type="chains" value="AG/CG=1-156"/>
</dbReference>
<dbReference type="PDB" id="4V7W">
    <property type="method" value="X-ray"/>
    <property type="resolution" value="3.00 A"/>
    <property type="chains" value="AG/CG=1-156"/>
</dbReference>
<dbReference type="PDB" id="4V7X">
    <property type="method" value="X-ray"/>
    <property type="resolution" value="3.00 A"/>
    <property type="chains" value="AG/CG=1-156"/>
</dbReference>
<dbReference type="PDB" id="4V7Y">
    <property type="method" value="X-ray"/>
    <property type="resolution" value="3.00 A"/>
    <property type="chains" value="AG/CG=1-156"/>
</dbReference>
<dbReference type="PDB" id="4V7Z">
    <property type="method" value="X-ray"/>
    <property type="resolution" value="3.10 A"/>
    <property type="chains" value="AG/CG=1-156"/>
</dbReference>
<dbReference type="PDB" id="4V87">
    <property type="method" value="X-ray"/>
    <property type="resolution" value="3.10 A"/>
    <property type="chains" value="BJ/CJ=1-156"/>
</dbReference>
<dbReference type="PDB" id="4V8A">
    <property type="method" value="X-ray"/>
    <property type="resolution" value="3.20 A"/>
    <property type="chains" value="CG/DG=1-156"/>
</dbReference>
<dbReference type="PDB" id="4V8B">
    <property type="method" value="X-ray"/>
    <property type="resolution" value="3.00 A"/>
    <property type="chains" value="AJ/CJ=1-156"/>
</dbReference>
<dbReference type="PDB" id="4V8C">
    <property type="method" value="X-ray"/>
    <property type="resolution" value="3.30 A"/>
    <property type="chains" value="CJ/DJ=1-156"/>
</dbReference>
<dbReference type="PDB" id="4V8D">
    <property type="method" value="X-ray"/>
    <property type="resolution" value="3.00 A"/>
    <property type="chains" value="AJ/CJ=1-156"/>
</dbReference>
<dbReference type="PDB" id="4V8E">
    <property type="method" value="X-ray"/>
    <property type="resolution" value="3.30 A"/>
    <property type="chains" value="BJ/DJ=1-156"/>
</dbReference>
<dbReference type="PDB" id="4V8F">
    <property type="method" value="X-ray"/>
    <property type="resolution" value="3.30 A"/>
    <property type="chains" value="BJ/CJ=1-156"/>
</dbReference>
<dbReference type="PDB" id="4V8G">
    <property type="method" value="X-ray"/>
    <property type="resolution" value="3.00 A"/>
    <property type="chains" value="AG/CG=1-156"/>
</dbReference>
<dbReference type="PDB" id="4V8H">
    <property type="method" value="X-ray"/>
    <property type="resolution" value="3.10 A"/>
    <property type="chains" value="AG/CG=1-156"/>
</dbReference>
<dbReference type="PDB" id="4V8I">
    <property type="method" value="X-ray"/>
    <property type="resolution" value="2.70 A"/>
    <property type="chains" value="AG/CG=1-156"/>
</dbReference>
<dbReference type="PDB" id="4V8J">
    <property type="method" value="X-ray"/>
    <property type="resolution" value="3.90 A"/>
    <property type="chains" value="AG/CG=1-156"/>
</dbReference>
<dbReference type="PDB" id="4V8N">
    <property type="method" value="X-ray"/>
    <property type="resolution" value="3.10 A"/>
    <property type="chains" value="AG/CG=1-156"/>
</dbReference>
<dbReference type="PDB" id="4V8O">
    <property type="method" value="X-ray"/>
    <property type="resolution" value="3.80 A"/>
    <property type="chains" value="AG=1-156"/>
</dbReference>
<dbReference type="PDB" id="4V8Q">
    <property type="method" value="X-ray"/>
    <property type="resolution" value="3.10 A"/>
    <property type="chains" value="BG=1-156"/>
</dbReference>
<dbReference type="PDB" id="4V8U">
    <property type="method" value="X-ray"/>
    <property type="resolution" value="3.70 A"/>
    <property type="chains" value="AG/CG=1-156"/>
</dbReference>
<dbReference type="PDB" id="4V8X">
    <property type="method" value="X-ray"/>
    <property type="resolution" value="3.35 A"/>
    <property type="chains" value="AG/CG=1-156"/>
</dbReference>
<dbReference type="PDB" id="4V90">
    <property type="method" value="X-ray"/>
    <property type="resolution" value="2.95 A"/>
    <property type="chains" value="AG=1-156"/>
</dbReference>
<dbReference type="PDB" id="4V95">
    <property type="method" value="X-ray"/>
    <property type="resolution" value="3.20 A"/>
    <property type="chains" value="AG/CG=1-156"/>
</dbReference>
<dbReference type="PDB" id="4V97">
    <property type="method" value="X-ray"/>
    <property type="resolution" value="3.52 A"/>
    <property type="chains" value="AG/CG=1-156"/>
</dbReference>
<dbReference type="PDB" id="4V9A">
    <property type="method" value="X-ray"/>
    <property type="resolution" value="3.30 A"/>
    <property type="chains" value="AJ/CJ=1-156"/>
</dbReference>
<dbReference type="PDB" id="4V9B">
    <property type="method" value="X-ray"/>
    <property type="resolution" value="3.10 A"/>
    <property type="chains" value="AJ/CJ=1-156"/>
</dbReference>
<dbReference type="PDB" id="4V9H">
    <property type="method" value="X-ray"/>
    <property type="resolution" value="2.86 A"/>
    <property type="chains" value="AG=2-156"/>
</dbReference>
<dbReference type="PDB" id="4V9I">
    <property type="method" value="X-ray"/>
    <property type="resolution" value="3.30 A"/>
    <property type="chains" value="AG/CG=2-156"/>
</dbReference>
<dbReference type="PDB" id="4V9R">
    <property type="method" value="X-ray"/>
    <property type="resolution" value="3.00 A"/>
    <property type="chains" value="AG/CG=1-156"/>
</dbReference>
<dbReference type="PDB" id="4V9S">
    <property type="method" value="X-ray"/>
    <property type="resolution" value="3.10 A"/>
    <property type="chains" value="AG/CG=1-156"/>
</dbReference>
<dbReference type="PDB" id="4W2E">
    <property type="method" value="X-ray"/>
    <property type="resolution" value="2.90 A"/>
    <property type="chains" value="g=1-156"/>
</dbReference>
<dbReference type="PDB" id="4W2F">
    <property type="method" value="X-ray"/>
    <property type="resolution" value="2.40 A"/>
    <property type="chains" value="AG/CG=1-156"/>
</dbReference>
<dbReference type="PDB" id="4W2G">
    <property type="method" value="X-ray"/>
    <property type="resolution" value="2.55 A"/>
    <property type="chains" value="AG/CG=1-156"/>
</dbReference>
<dbReference type="PDB" id="4W2H">
    <property type="method" value="X-ray"/>
    <property type="resolution" value="2.70 A"/>
    <property type="chains" value="AG/CG=1-156"/>
</dbReference>
<dbReference type="PDB" id="4W2I">
    <property type="method" value="X-ray"/>
    <property type="resolution" value="2.70 A"/>
    <property type="chains" value="AG/CG=1-156"/>
</dbReference>
<dbReference type="PDB" id="4W4G">
    <property type="method" value="X-ray"/>
    <property type="resolution" value="3.30 A"/>
    <property type="chains" value="QG/XG=1-156"/>
</dbReference>
<dbReference type="PDB" id="4WPO">
    <property type="method" value="X-ray"/>
    <property type="resolution" value="2.80 A"/>
    <property type="chains" value="BG/DG=1-156"/>
</dbReference>
<dbReference type="PDB" id="4WQ1">
    <property type="method" value="X-ray"/>
    <property type="resolution" value="3.10 A"/>
    <property type="chains" value="62/6E=1-156"/>
</dbReference>
<dbReference type="PDB" id="4WQF">
    <property type="method" value="X-ray"/>
    <property type="resolution" value="2.80 A"/>
    <property type="chains" value="BG/DG=1-156"/>
</dbReference>
<dbReference type="PDB" id="4WQR">
    <property type="method" value="X-ray"/>
    <property type="resolution" value="3.15 A"/>
    <property type="chains" value="62/6E=1-156"/>
</dbReference>
<dbReference type="PDB" id="4WQU">
    <property type="method" value="X-ray"/>
    <property type="resolution" value="2.80 A"/>
    <property type="chains" value="BG/DG=1-156"/>
</dbReference>
<dbReference type="PDB" id="4WQY">
    <property type="method" value="X-ray"/>
    <property type="resolution" value="2.80 A"/>
    <property type="chains" value="BG/DG=1-156"/>
</dbReference>
<dbReference type="PDB" id="4WR6">
    <property type="method" value="X-ray"/>
    <property type="resolution" value="3.05 A"/>
    <property type="chains" value="62/6E=1-156"/>
</dbReference>
<dbReference type="PDB" id="4WRA">
    <property type="method" value="X-ray"/>
    <property type="resolution" value="3.05 A"/>
    <property type="chains" value="62/6E=1-156"/>
</dbReference>
<dbReference type="PDB" id="4WRO">
    <property type="method" value="X-ray"/>
    <property type="resolution" value="3.05 A"/>
    <property type="chains" value="6E=1-156"/>
</dbReference>
<dbReference type="PDB" id="4WSD">
    <property type="method" value="X-ray"/>
    <property type="resolution" value="2.95 A"/>
    <property type="chains" value="62/6E=1-156"/>
</dbReference>
<dbReference type="PDB" id="4WSM">
    <property type="method" value="X-ray"/>
    <property type="resolution" value="3.30 A"/>
    <property type="chains" value="62/6E=1-156"/>
</dbReference>
<dbReference type="PDB" id="4WT1">
    <property type="method" value="X-ray"/>
    <property type="resolution" value="3.05 A"/>
    <property type="chains" value="62/6E=1-156"/>
</dbReference>
<dbReference type="PDB" id="4WT8">
    <property type="method" value="X-ray"/>
    <property type="resolution" value="3.40 A"/>
    <property type="chains" value="AG/BG=2-156"/>
</dbReference>
<dbReference type="PDB" id="4WU1">
    <property type="method" value="X-ray"/>
    <property type="resolution" value="3.20 A"/>
    <property type="chains" value="62/6E=1-156"/>
</dbReference>
<dbReference type="PDB" id="4WZD">
    <property type="method" value="X-ray"/>
    <property type="resolution" value="3.10 A"/>
    <property type="chains" value="62/6E=1-156"/>
</dbReference>
<dbReference type="PDB" id="4WZO">
    <property type="method" value="X-ray"/>
    <property type="resolution" value="3.30 A"/>
    <property type="chains" value="62/6E=1-156"/>
</dbReference>
<dbReference type="PDB" id="4X62">
    <property type="method" value="X-ray"/>
    <property type="resolution" value="3.45 A"/>
    <property type="chains" value="G=2-156"/>
</dbReference>
<dbReference type="PDB" id="4X64">
    <property type="method" value="X-ray"/>
    <property type="resolution" value="3.35 A"/>
    <property type="chains" value="G=2-156"/>
</dbReference>
<dbReference type="PDB" id="4X65">
    <property type="method" value="X-ray"/>
    <property type="resolution" value="3.35 A"/>
    <property type="chains" value="G=2-156"/>
</dbReference>
<dbReference type="PDB" id="4X66">
    <property type="method" value="X-ray"/>
    <property type="resolution" value="3.45 A"/>
    <property type="chains" value="G=2-156"/>
</dbReference>
<dbReference type="PDB" id="4Y4O">
    <property type="method" value="X-ray"/>
    <property type="resolution" value="2.30 A"/>
    <property type="chains" value="1g/2g=1-156"/>
</dbReference>
<dbReference type="PDB" id="4Y4P">
    <property type="method" value="X-ray"/>
    <property type="resolution" value="2.50 A"/>
    <property type="chains" value="1g/2g=1-156"/>
</dbReference>
<dbReference type="PDB" id="4YHH">
    <property type="method" value="X-ray"/>
    <property type="resolution" value="3.42 A"/>
    <property type="chains" value="G=2-156"/>
</dbReference>
<dbReference type="PDB" id="4YPB">
    <property type="method" value="X-ray"/>
    <property type="resolution" value="3.40 A"/>
    <property type="chains" value="QG/XG=1-156"/>
</dbReference>
<dbReference type="PDB" id="4YY3">
    <property type="method" value="X-ray"/>
    <property type="resolution" value="3.60 A"/>
    <property type="chains" value="G=1-156"/>
</dbReference>
<dbReference type="PDB" id="4YZV">
    <property type="method" value="X-ray"/>
    <property type="resolution" value="3.10 A"/>
    <property type="chains" value="QG/XG=1-156"/>
</dbReference>
<dbReference type="PDB" id="4Z3S">
    <property type="method" value="X-ray"/>
    <property type="resolution" value="2.65 A"/>
    <property type="chains" value="1g/2g=1-156"/>
</dbReference>
<dbReference type="PDB" id="4Z8C">
    <property type="method" value="X-ray"/>
    <property type="resolution" value="2.90 A"/>
    <property type="chains" value="1g/2g=1-156"/>
</dbReference>
<dbReference type="PDB" id="4ZER">
    <property type="method" value="X-ray"/>
    <property type="resolution" value="3.10 A"/>
    <property type="chains" value="1g/2g=2-156"/>
</dbReference>
<dbReference type="PDB" id="4ZSN">
    <property type="method" value="X-ray"/>
    <property type="resolution" value="3.60 A"/>
    <property type="chains" value="QG/XG=1-156"/>
</dbReference>
<dbReference type="PDB" id="5A9Z">
    <property type="method" value="EM"/>
    <property type="resolution" value="4.70 A"/>
    <property type="chains" value="BK=2-156"/>
</dbReference>
<dbReference type="PDB" id="5AA0">
    <property type="method" value="EM"/>
    <property type="resolution" value="5.00 A"/>
    <property type="chains" value="BK=2-156"/>
</dbReference>
<dbReference type="PDB" id="5BR8">
    <property type="method" value="X-ray"/>
    <property type="resolution" value="3.40 A"/>
    <property type="chains" value="G=1-156"/>
</dbReference>
<dbReference type="PDB" id="5CZP">
    <property type="method" value="X-ray"/>
    <property type="resolution" value="3.30 A"/>
    <property type="chains" value="QG/XG=1-156"/>
</dbReference>
<dbReference type="PDB" id="5D8B">
    <property type="method" value="X-ray"/>
    <property type="resolution" value="3.63 A"/>
    <property type="chains" value="DC/HA=1-156"/>
</dbReference>
<dbReference type="PDB" id="5DFE">
    <property type="method" value="X-ray"/>
    <property type="resolution" value="3.10 A"/>
    <property type="chains" value="QG/XG=1-156"/>
</dbReference>
<dbReference type="PDB" id="5DOX">
    <property type="method" value="X-ray"/>
    <property type="resolution" value="3.10 A"/>
    <property type="chains" value="1g/2g=1-156"/>
</dbReference>
<dbReference type="PDB" id="5DOY">
    <property type="method" value="X-ray"/>
    <property type="resolution" value="2.60 A"/>
    <property type="chains" value="1g/2g=1-156"/>
</dbReference>
<dbReference type="PDB" id="5E7K">
    <property type="method" value="X-ray"/>
    <property type="resolution" value="3.20 A"/>
    <property type="chains" value="62/6E=1-156"/>
</dbReference>
<dbReference type="PDB" id="5E81">
    <property type="method" value="X-ray"/>
    <property type="resolution" value="2.95 A"/>
    <property type="chains" value="62/6E=1-156"/>
</dbReference>
<dbReference type="PDB" id="5EL4">
    <property type="method" value="X-ray"/>
    <property type="resolution" value="3.15 A"/>
    <property type="chains" value="62/6E=1-156"/>
</dbReference>
<dbReference type="PDB" id="5EL5">
    <property type="method" value="X-ray"/>
    <property type="resolution" value="3.15 A"/>
    <property type="chains" value="62/6E=1-156"/>
</dbReference>
<dbReference type="PDB" id="5EL6">
    <property type="method" value="X-ray"/>
    <property type="resolution" value="3.10 A"/>
    <property type="chains" value="62/6E=1-156"/>
</dbReference>
<dbReference type="PDB" id="5EL7">
    <property type="method" value="X-ray"/>
    <property type="resolution" value="3.15 A"/>
    <property type="chains" value="62/6E=1-156"/>
</dbReference>
<dbReference type="PDB" id="5F8K">
    <property type="method" value="X-ray"/>
    <property type="resolution" value="2.80 A"/>
    <property type="chains" value="1g/2g=2-156"/>
</dbReference>
<dbReference type="PDB" id="5FDU">
    <property type="method" value="X-ray"/>
    <property type="resolution" value="2.90 A"/>
    <property type="chains" value="1g/2g=2-156"/>
</dbReference>
<dbReference type="PDB" id="5FDV">
    <property type="method" value="X-ray"/>
    <property type="resolution" value="2.80 A"/>
    <property type="chains" value="1g/2g=2-156"/>
</dbReference>
<dbReference type="PDB" id="5HAU">
    <property type="method" value="X-ray"/>
    <property type="resolution" value="3.00 A"/>
    <property type="chains" value="1g/2g=1-156"/>
</dbReference>
<dbReference type="PDB" id="5HCP">
    <property type="method" value="X-ray"/>
    <property type="resolution" value="2.89 A"/>
    <property type="chains" value="1g/2g=1-156"/>
</dbReference>
<dbReference type="PDB" id="5HCQ">
    <property type="method" value="X-ray"/>
    <property type="resolution" value="2.80 A"/>
    <property type="chains" value="1g/2g=1-156"/>
</dbReference>
<dbReference type="PDB" id="5HCR">
    <property type="method" value="X-ray"/>
    <property type="resolution" value="2.80 A"/>
    <property type="chains" value="1g/2g=1-156"/>
</dbReference>
<dbReference type="PDB" id="5HD1">
    <property type="method" value="X-ray"/>
    <property type="resolution" value="2.70 A"/>
    <property type="chains" value="1g/2g=1-156"/>
</dbReference>
<dbReference type="PDB" id="5IB7">
    <property type="method" value="X-ray"/>
    <property type="resolution" value="2.99 A"/>
    <property type="chains" value="62/6E=1-156"/>
</dbReference>
<dbReference type="PDB" id="5IB8">
    <property type="method" value="X-ray"/>
    <property type="resolution" value="3.13 A"/>
    <property type="chains" value="62/6E=1-156"/>
</dbReference>
<dbReference type="PDB" id="5IBB">
    <property type="method" value="X-ray"/>
    <property type="resolution" value="2.96 A"/>
    <property type="chains" value="62/6E=1-156"/>
</dbReference>
<dbReference type="PDB" id="5IMQ">
    <property type="method" value="EM"/>
    <property type="resolution" value="3.80 A"/>
    <property type="chains" value="K=1-156"/>
</dbReference>
<dbReference type="PDB" id="5IMR">
    <property type="method" value="EM"/>
    <property type="chains" value="K=1-156"/>
</dbReference>
<dbReference type="PDB" id="5IWA">
    <property type="method" value="X-ray"/>
    <property type="resolution" value="3.50 A"/>
    <property type="chains" value="G=2-156"/>
</dbReference>
<dbReference type="PDB" id="5J30">
    <property type="method" value="X-ray"/>
    <property type="resolution" value="3.20 A"/>
    <property type="chains" value="QG/XG=1-156"/>
</dbReference>
<dbReference type="PDB" id="5J3C">
    <property type="method" value="X-ray"/>
    <property type="resolution" value="3.04 A"/>
    <property type="chains" value="QG/XG=1-156"/>
</dbReference>
<dbReference type="PDB" id="5J4B">
    <property type="method" value="X-ray"/>
    <property type="resolution" value="2.60 A"/>
    <property type="chains" value="1g/2g=1-156"/>
</dbReference>
<dbReference type="PDB" id="5J4C">
    <property type="method" value="X-ray"/>
    <property type="resolution" value="2.80 A"/>
    <property type="chains" value="1g/2g=1-156"/>
</dbReference>
<dbReference type="PDB" id="5J8B">
    <property type="method" value="X-ray"/>
    <property type="resolution" value="2.60 A"/>
    <property type="chains" value="g=1-156"/>
</dbReference>
<dbReference type="PDB" id="5LMN">
    <property type="method" value="EM"/>
    <property type="resolution" value="3.55 A"/>
    <property type="chains" value="G=1-156"/>
</dbReference>
<dbReference type="PDB" id="5LMO">
    <property type="method" value="EM"/>
    <property type="resolution" value="4.30 A"/>
    <property type="chains" value="G=1-156"/>
</dbReference>
<dbReference type="PDB" id="5LMP">
    <property type="method" value="EM"/>
    <property type="resolution" value="5.35 A"/>
    <property type="chains" value="G=1-156"/>
</dbReference>
<dbReference type="PDB" id="5LMQ">
    <property type="method" value="EM"/>
    <property type="resolution" value="4.20 A"/>
    <property type="chains" value="G=1-156"/>
</dbReference>
<dbReference type="PDB" id="5LMR">
    <property type="method" value="EM"/>
    <property type="resolution" value="4.45 A"/>
    <property type="chains" value="G=1-156"/>
</dbReference>
<dbReference type="PDB" id="5LMS">
    <property type="method" value="EM"/>
    <property type="resolution" value="5.10 A"/>
    <property type="chains" value="G=1-156"/>
</dbReference>
<dbReference type="PDB" id="5LMT">
    <property type="method" value="EM"/>
    <property type="resolution" value="4.15 A"/>
    <property type="chains" value="G=1-156"/>
</dbReference>
<dbReference type="PDB" id="5LMU">
    <property type="method" value="EM"/>
    <property type="resolution" value="4.00 A"/>
    <property type="chains" value="G=1-156"/>
</dbReference>
<dbReference type="PDB" id="5LMV">
    <property type="method" value="EM"/>
    <property type="resolution" value="4.90 A"/>
    <property type="chains" value="G=1-156"/>
</dbReference>
<dbReference type="PDB" id="5NDJ">
    <property type="method" value="X-ray"/>
    <property type="resolution" value="3.15 A"/>
    <property type="chains" value="62/6E=1-156"/>
</dbReference>
<dbReference type="PDB" id="5NDK">
    <property type="method" value="X-ray"/>
    <property type="resolution" value="2.95 A"/>
    <property type="chains" value="62/6E=1-156"/>
</dbReference>
<dbReference type="PDB" id="5OT7">
    <property type="method" value="EM"/>
    <property type="resolution" value="3.80 A"/>
    <property type="chains" value="F=2-156"/>
</dbReference>
<dbReference type="PDB" id="5UQ7">
    <property type="method" value="EM"/>
    <property type="resolution" value="3.50 A"/>
    <property type="chains" value="g=2-156"/>
</dbReference>
<dbReference type="PDB" id="5UQ8">
    <property type="method" value="EM"/>
    <property type="resolution" value="3.20 A"/>
    <property type="chains" value="g=2-156"/>
</dbReference>
<dbReference type="PDB" id="5VP2">
    <property type="method" value="X-ray"/>
    <property type="resolution" value="2.80 A"/>
    <property type="chains" value="1g/2g=1-156"/>
</dbReference>
<dbReference type="PDB" id="5VPO">
    <property type="method" value="X-ray"/>
    <property type="resolution" value="3.34 A"/>
    <property type="chains" value="QG/XG=1-156"/>
</dbReference>
<dbReference type="PDB" id="5VPP">
    <property type="method" value="X-ray"/>
    <property type="resolution" value="3.90 A"/>
    <property type="chains" value="QG/XG=1-156"/>
</dbReference>
<dbReference type="PDB" id="5W4K">
    <property type="method" value="X-ray"/>
    <property type="resolution" value="2.70 A"/>
    <property type="chains" value="1g/2g=1-156"/>
</dbReference>
<dbReference type="PDB" id="5WIS">
    <property type="method" value="X-ray"/>
    <property type="resolution" value="2.70 A"/>
    <property type="chains" value="1g/2g=1-156"/>
</dbReference>
<dbReference type="PDB" id="5WIT">
    <property type="method" value="X-ray"/>
    <property type="resolution" value="2.60 A"/>
    <property type="chains" value="1g/2g=1-156"/>
</dbReference>
<dbReference type="PDB" id="5WNP">
    <property type="method" value="X-ray"/>
    <property type="resolution" value="3.30 A"/>
    <property type="chains" value="G=2-156"/>
</dbReference>
<dbReference type="PDB" id="5WNQ">
    <property type="method" value="X-ray"/>
    <property type="resolution" value="3.50 A"/>
    <property type="chains" value="G=2-156"/>
</dbReference>
<dbReference type="PDB" id="5WNR">
    <property type="method" value="X-ray"/>
    <property type="resolution" value="3.50 A"/>
    <property type="chains" value="G=2-156"/>
</dbReference>
<dbReference type="PDB" id="5WNS">
    <property type="method" value="X-ray"/>
    <property type="resolution" value="3.50 A"/>
    <property type="chains" value="G=2-156"/>
</dbReference>
<dbReference type="PDB" id="5WNT">
    <property type="method" value="X-ray"/>
    <property type="resolution" value="3.30 A"/>
    <property type="chains" value="G=2-156"/>
</dbReference>
<dbReference type="PDB" id="5WNU">
    <property type="method" value="X-ray"/>
    <property type="resolution" value="3.40 A"/>
    <property type="chains" value="G=2-156"/>
</dbReference>
<dbReference type="PDB" id="5WNV">
    <property type="method" value="X-ray"/>
    <property type="resolution" value="3.30 A"/>
    <property type="chains" value="G=2-156"/>
</dbReference>
<dbReference type="PDB" id="5ZLU">
    <property type="method" value="EM"/>
    <property type="resolution" value="3.60 A"/>
    <property type="chains" value="M=1-156"/>
</dbReference>
<dbReference type="PDB" id="6BUW">
    <property type="method" value="X-ray"/>
    <property type="resolution" value="3.50 A"/>
    <property type="chains" value="QG/XG=1-156"/>
</dbReference>
<dbReference type="PDB" id="6BZ6">
    <property type="method" value="X-ray"/>
    <property type="resolution" value="3.18 A"/>
    <property type="chains" value="QG/XG=1-156"/>
</dbReference>
<dbReference type="PDB" id="6BZ7">
    <property type="method" value="X-ray"/>
    <property type="resolution" value="3.68 A"/>
    <property type="chains" value="QG/XG=1-156"/>
</dbReference>
<dbReference type="PDB" id="6BZ8">
    <property type="method" value="X-ray"/>
    <property type="resolution" value="3.74 A"/>
    <property type="chains" value="QG/XG=1-156"/>
</dbReference>
<dbReference type="PDB" id="6C5L">
    <property type="method" value="X-ray"/>
    <property type="resolution" value="3.20 A"/>
    <property type="chains" value="AG/CG=1-156"/>
</dbReference>
<dbReference type="PDB" id="6CAE">
    <property type="method" value="X-ray"/>
    <property type="resolution" value="2.60 A"/>
    <property type="chains" value="1g/2g=1-156"/>
</dbReference>
<dbReference type="PDB" id="6CAO">
    <property type="method" value="X-ray"/>
    <property type="resolution" value="3.45 A"/>
    <property type="chains" value="G=2-156"/>
</dbReference>
<dbReference type="PDB" id="6CAP">
    <property type="method" value="X-ray"/>
    <property type="resolution" value="3.40 A"/>
    <property type="chains" value="G=2-156"/>
</dbReference>
<dbReference type="PDB" id="6CAQ">
    <property type="method" value="X-ray"/>
    <property type="resolution" value="3.40 A"/>
    <property type="chains" value="G=2-156"/>
</dbReference>
<dbReference type="PDB" id="6CAR">
    <property type="method" value="X-ray"/>
    <property type="resolution" value="3.40 A"/>
    <property type="chains" value="G=2-156"/>
</dbReference>
<dbReference type="PDB" id="6CAS">
    <property type="method" value="X-ray"/>
    <property type="resolution" value="3.50 A"/>
    <property type="chains" value="G=2-156"/>
</dbReference>
<dbReference type="PDB" id="6CFJ">
    <property type="method" value="X-ray"/>
    <property type="resolution" value="2.80 A"/>
    <property type="chains" value="1g/2g=1-156"/>
</dbReference>
<dbReference type="PDB" id="6CFK">
    <property type="method" value="X-ray"/>
    <property type="resolution" value="2.70 A"/>
    <property type="chains" value="1g/2g=1-156"/>
</dbReference>
<dbReference type="PDB" id="6CFL">
    <property type="method" value="X-ray"/>
    <property type="resolution" value="2.60 A"/>
    <property type="chains" value="1g/2g=1-156"/>
</dbReference>
<dbReference type="PDB" id="6CZR">
    <property type="method" value="X-ray"/>
    <property type="resolution" value="3.14 A"/>
    <property type="chains" value="1g/2g=2-156"/>
</dbReference>
<dbReference type="PDB" id="6DTI">
    <property type="method" value="X-ray"/>
    <property type="resolution" value="3.54 A"/>
    <property type="chains" value="G=1-156"/>
</dbReference>
<dbReference type="PDB" id="6FKR">
    <property type="method" value="X-ray"/>
    <property type="resolution" value="3.20 A"/>
    <property type="chains" value="1g/2g=2-156"/>
</dbReference>
<dbReference type="PDB" id="6GSJ">
    <property type="method" value="X-ray"/>
    <property type="resolution" value="2.96 A"/>
    <property type="chains" value="62/6E=1-156"/>
</dbReference>
<dbReference type="PDB" id="6GSK">
    <property type="method" value="X-ray"/>
    <property type="resolution" value="3.36 A"/>
    <property type="chains" value="62/6E=1-156"/>
</dbReference>
<dbReference type="PDB" id="6GSL">
    <property type="method" value="X-ray"/>
    <property type="resolution" value="3.16 A"/>
    <property type="chains" value="62/6E=1-156"/>
</dbReference>
<dbReference type="PDB" id="6GZQ">
    <property type="method" value="EM"/>
    <property type="resolution" value="3.28 A"/>
    <property type="chains" value="G2=2-156"/>
</dbReference>
<dbReference type="PDB" id="6GZX">
    <property type="method" value="EM"/>
    <property type="resolution" value="4.57 A"/>
    <property type="chains" value="G3/G4=2-156"/>
</dbReference>
<dbReference type="PDB" id="6GZZ">
    <property type="method" value="EM"/>
    <property type="resolution" value="4.13 A"/>
    <property type="chains" value="G3/G4=2-156"/>
</dbReference>
<dbReference type="PDB" id="6MKN">
    <property type="method" value="X-ray"/>
    <property type="resolution" value="3.46 A"/>
    <property type="chains" value="G=1-156"/>
</dbReference>
<dbReference type="PDB" id="6MPF">
    <property type="method" value="X-ray"/>
    <property type="resolution" value="3.33 A"/>
    <property type="chains" value="G=2-156"/>
</dbReference>
<dbReference type="PDB" id="6MPI">
    <property type="method" value="X-ray"/>
    <property type="resolution" value="3.33 A"/>
    <property type="chains" value="G=1-156"/>
</dbReference>
<dbReference type="PDB" id="6N9E">
    <property type="method" value="X-ray"/>
    <property type="resolution" value="3.70 A"/>
    <property type="chains" value="1g/2g=1-156"/>
</dbReference>
<dbReference type="PDB" id="6N9F">
    <property type="method" value="X-ray"/>
    <property type="resolution" value="3.70 A"/>
    <property type="chains" value="1g/2g=1-156"/>
</dbReference>
<dbReference type="PDB" id="6ND5">
    <property type="method" value="X-ray"/>
    <property type="resolution" value="2.60 A"/>
    <property type="chains" value="1g/2g=1-156"/>
</dbReference>
<dbReference type="PDB" id="6ND6">
    <property type="method" value="X-ray"/>
    <property type="resolution" value="2.85 A"/>
    <property type="chains" value="1g/2g=1-156"/>
</dbReference>
<dbReference type="PDB" id="6NDK">
    <property type="method" value="X-ray"/>
    <property type="resolution" value="3.64 A"/>
    <property type="chains" value="QG/XG=1-156"/>
</dbReference>
<dbReference type="PDB" id="6NSH">
    <property type="method" value="X-ray"/>
    <property type="resolution" value="3.40 A"/>
    <property type="chains" value="QG/XG=1-156"/>
</dbReference>
<dbReference type="PDB" id="6NTA">
    <property type="method" value="X-ray"/>
    <property type="resolution" value="3.10 A"/>
    <property type="chains" value="QG/XG=1-156"/>
</dbReference>
<dbReference type="PDB" id="6NUO">
    <property type="method" value="X-ray"/>
    <property type="resolution" value="3.20 A"/>
    <property type="chains" value="QG/XG=1-156"/>
</dbReference>
<dbReference type="PDB" id="6NWY">
    <property type="method" value="X-ray"/>
    <property type="resolution" value="3.50 A"/>
    <property type="chains" value="QG/XG=1-156"/>
</dbReference>
<dbReference type="PDB" id="6NY6">
    <property type="method" value="X-ray"/>
    <property type="resolution" value="3.74 A"/>
    <property type="chains" value="G=1-156"/>
</dbReference>
<dbReference type="PDB" id="6O3M">
    <property type="method" value="X-ray"/>
    <property type="resolution" value="3.97 A"/>
    <property type="chains" value="QG/XG=1-156"/>
</dbReference>
<dbReference type="PDB" id="6O97">
    <property type="method" value="X-ray"/>
    <property type="resolution" value="2.75 A"/>
    <property type="chains" value="1g/2g=1-156"/>
</dbReference>
<dbReference type="PDB" id="6OF1">
    <property type="method" value="X-ray"/>
    <property type="resolution" value="2.80 A"/>
    <property type="chains" value="1g/2g=1-156"/>
</dbReference>
<dbReference type="PDB" id="6OF6">
    <property type="method" value="X-ray"/>
    <property type="resolution" value="3.20 A"/>
    <property type="chains" value="QG/XG=1-156"/>
</dbReference>
<dbReference type="PDB" id="6OJ2">
    <property type="method" value="X-ray"/>
    <property type="resolution" value="3.20 A"/>
    <property type="chains" value="QG/XG=1-156"/>
</dbReference>
<dbReference type="PDB" id="6OPE">
    <property type="method" value="X-ray"/>
    <property type="resolution" value="3.10 A"/>
    <property type="chains" value="QG/XG=1-156"/>
</dbReference>
<dbReference type="PDB" id="6ORD">
    <property type="method" value="X-ray"/>
    <property type="resolution" value="3.10 A"/>
    <property type="chains" value="QG/XG=1-156"/>
</dbReference>
<dbReference type="PDB" id="6OSI">
    <property type="method" value="X-ray"/>
    <property type="resolution" value="4.14 A"/>
    <property type="chains" value="QG/XG=1-156"/>
</dbReference>
<dbReference type="PDB" id="6OTR">
    <property type="method" value="X-ray"/>
    <property type="resolution" value="3.12 A"/>
    <property type="chains" value="QG/XG=1-156"/>
</dbReference>
<dbReference type="PDB" id="6OXA">
    <property type="method" value="X-ray"/>
    <property type="resolution" value="3.25 A"/>
    <property type="chains" value="QG/XG=1-156"/>
</dbReference>
<dbReference type="PDB" id="6OXI">
    <property type="method" value="X-ray"/>
    <property type="resolution" value="3.50 A"/>
    <property type="chains" value="QG/XG=1-156"/>
</dbReference>
<dbReference type="PDB" id="6Q95">
    <property type="method" value="EM"/>
    <property type="resolution" value="3.70 A"/>
    <property type="chains" value="l=2-156"/>
</dbReference>
<dbReference type="PDB" id="6QNQ">
    <property type="method" value="X-ray"/>
    <property type="resolution" value="3.50 A"/>
    <property type="chains" value="62/6E=1-156"/>
</dbReference>
<dbReference type="PDB" id="6QNR">
    <property type="method" value="X-ray"/>
    <property type="resolution" value="3.10 A"/>
    <property type="chains" value="62/6E=1-156"/>
</dbReference>
<dbReference type="PDB" id="6UCQ">
    <property type="method" value="X-ray"/>
    <property type="resolution" value="3.50 A"/>
    <property type="chains" value="1g/2g=1-156"/>
</dbReference>
<dbReference type="PDB" id="6UO1">
    <property type="method" value="X-ray"/>
    <property type="resolution" value="2.95 A"/>
    <property type="chains" value="1g/2g=1-156"/>
</dbReference>
<dbReference type="PDB" id="6XHV">
    <property type="method" value="X-ray"/>
    <property type="resolution" value="2.40 A"/>
    <property type="chains" value="1g/2g=1-156"/>
</dbReference>
<dbReference type="PDB" id="6XHW">
    <property type="method" value="X-ray"/>
    <property type="resolution" value="2.50 A"/>
    <property type="chains" value="1g/2g=1-156"/>
</dbReference>
<dbReference type="PDB" id="6XHX">
    <property type="method" value="X-ray"/>
    <property type="resolution" value="2.55 A"/>
    <property type="chains" value="1g/2g=1-156"/>
</dbReference>
<dbReference type="PDB" id="6XHY">
    <property type="method" value="X-ray"/>
    <property type="resolution" value="2.60 A"/>
    <property type="chains" value="1g/2g=1-156"/>
</dbReference>
<dbReference type="PDB" id="6XQD">
    <property type="method" value="X-ray"/>
    <property type="resolution" value="2.80 A"/>
    <property type="chains" value="1g/2g=1-156"/>
</dbReference>
<dbReference type="PDB" id="6XQE">
    <property type="method" value="X-ray"/>
    <property type="resolution" value="3.00 A"/>
    <property type="chains" value="1g/2g=1-156"/>
</dbReference>
<dbReference type="PDB" id="7AZO">
    <property type="method" value="X-ray"/>
    <property type="resolution" value="3.30 A"/>
    <property type="chains" value="S7A/S7B=1-156"/>
</dbReference>
<dbReference type="PDB" id="7AZS">
    <property type="method" value="X-ray"/>
    <property type="resolution" value="3.10 A"/>
    <property type="chains" value="S7A/S7B=1-156"/>
</dbReference>
<dbReference type="PDB" id="7DUG">
    <property type="method" value="X-ray"/>
    <property type="resolution" value="3.75 A"/>
    <property type="chains" value="G=1-156"/>
</dbReference>
<dbReference type="PDB" id="7DUH">
    <property type="method" value="X-ray"/>
    <property type="resolution" value="3.75 A"/>
    <property type="chains" value="G=1-156"/>
</dbReference>
<dbReference type="PDB" id="7DUI">
    <property type="method" value="X-ray"/>
    <property type="resolution" value="3.62 A"/>
    <property type="chains" value="G=1-156"/>
</dbReference>
<dbReference type="PDB" id="7DUJ">
    <property type="method" value="X-ray"/>
    <property type="resolution" value="3.75 A"/>
    <property type="chains" value="G=1-156"/>
</dbReference>
<dbReference type="PDB" id="7DUK">
    <property type="method" value="X-ray"/>
    <property type="resolution" value="3.60 A"/>
    <property type="chains" value="G=1-156"/>
</dbReference>
<dbReference type="PDB" id="7DUL">
    <property type="method" value="X-ray"/>
    <property type="resolution" value="3.62 A"/>
    <property type="chains" value="G=1-156"/>
</dbReference>
<dbReference type="PDB" id="7JQL">
    <property type="method" value="X-ray"/>
    <property type="resolution" value="3.00 A"/>
    <property type="chains" value="1g/2g=1-156"/>
</dbReference>
<dbReference type="PDB" id="7JQM">
    <property type="method" value="X-ray"/>
    <property type="resolution" value="3.05 A"/>
    <property type="chains" value="1g/2g=1-156"/>
</dbReference>
<dbReference type="PDB" id="7LH5">
    <property type="method" value="X-ray"/>
    <property type="resolution" value="3.27 A"/>
    <property type="chains" value="AG/CG=1-156"/>
</dbReference>
<dbReference type="PDB" id="7MD7">
    <property type="method" value="X-ray"/>
    <property type="resolution" value="2.80 A"/>
    <property type="chains" value="1g/2g=1-156"/>
</dbReference>
<dbReference type="PDB" id="7RQ8">
    <property type="method" value="X-ray"/>
    <property type="resolution" value="2.50 A"/>
    <property type="chains" value="1g/2g=1-156"/>
</dbReference>
<dbReference type="PDB" id="7RQ9">
    <property type="method" value="X-ray"/>
    <property type="resolution" value="2.60 A"/>
    <property type="chains" value="1g/2g=1-156"/>
</dbReference>
<dbReference type="PDB" id="7RQA">
    <property type="method" value="X-ray"/>
    <property type="resolution" value="2.40 A"/>
    <property type="chains" value="1g/2g=1-156"/>
</dbReference>
<dbReference type="PDB" id="7RQB">
    <property type="method" value="X-ray"/>
    <property type="resolution" value="2.45 A"/>
    <property type="chains" value="1g/2g=1-156"/>
</dbReference>
<dbReference type="PDB" id="7RQC">
    <property type="method" value="X-ray"/>
    <property type="resolution" value="2.50 A"/>
    <property type="chains" value="1g/2g=1-156"/>
</dbReference>
<dbReference type="PDB" id="7RQD">
    <property type="method" value="X-ray"/>
    <property type="resolution" value="2.50 A"/>
    <property type="chains" value="1g/2g=1-156"/>
</dbReference>
<dbReference type="PDB" id="7RQE">
    <property type="method" value="X-ray"/>
    <property type="resolution" value="2.40 A"/>
    <property type="chains" value="1g/2g=1-156"/>
</dbReference>
<dbReference type="PDB" id="7U2H">
    <property type="method" value="X-ray"/>
    <property type="resolution" value="2.55 A"/>
    <property type="chains" value="1g/2g=1-156"/>
</dbReference>
<dbReference type="PDB" id="7U2I">
    <property type="method" value="X-ray"/>
    <property type="resolution" value="2.55 A"/>
    <property type="chains" value="1g/2g=1-156"/>
</dbReference>
<dbReference type="PDB" id="7U2J">
    <property type="method" value="X-ray"/>
    <property type="resolution" value="2.55 A"/>
    <property type="chains" value="1g/2g=1-156"/>
</dbReference>
<dbReference type="PDB" id="7V2L">
    <property type="method" value="EM"/>
    <property type="resolution" value="3.30 A"/>
    <property type="chains" value="G=1-156"/>
</dbReference>
<dbReference type="PDB" id="7V2M">
    <property type="method" value="EM"/>
    <property type="resolution" value="3.40 A"/>
    <property type="chains" value="G=1-156"/>
</dbReference>
<dbReference type="PDB" id="7V2N">
    <property type="method" value="EM"/>
    <property type="resolution" value="3.60 A"/>
    <property type="chains" value="G=1-156"/>
</dbReference>
<dbReference type="PDB" id="7V2O">
    <property type="method" value="EM"/>
    <property type="resolution" value="3.50 A"/>
    <property type="chains" value="G=1-156"/>
</dbReference>
<dbReference type="PDB" id="7V2P">
    <property type="method" value="EM"/>
    <property type="resolution" value="3.30 A"/>
    <property type="chains" value="G=1-156"/>
</dbReference>
<dbReference type="PDB" id="7V2Q">
    <property type="method" value="EM"/>
    <property type="resolution" value="3.24 A"/>
    <property type="chains" value="G=1-156"/>
</dbReference>
<dbReference type="PDB" id="8CVJ">
    <property type="method" value="X-ray"/>
    <property type="resolution" value="2.40 A"/>
    <property type="chains" value="1g/2g=1-156"/>
</dbReference>
<dbReference type="PDB" id="8CVK">
    <property type="method" value="X-ray"/>
    <property type="resolution" value="2.50 A"/>
    <property type="chains" value="1g/2g=1-156"/>
</dbReference>
<dbReference type="PDB" id="8CVL">
    <property type="method" value="X-ray"/>
    <property type="resolution" value="2.30 A"/>
    <property type="chains" value="1g/2g=1-156"/>
</dbReference>
<dbReference type="PDB" id="8EKB">
    <property type="method" value="X-ray"/>
    <property type="resolution" value="2.70 A"/>
    <property type="chains" value="1g/2g=1-156"/>
</dbReference>
<dbReference type="PDB" id="8EV6">
    <property type="method" value="X-ray"/>
    <property type="resolution" value="2.95 A"/>
    <property type="chains" value="1g/2g=1-156"/>
</dbReference>
<dbReference type="PDB" id="8EV7">
    <property type="method" value="X-ray"/>
    <property type="resolution" value="2.89 A"/>
    <property type="chains" value="1g/2g=1-156"/>
</dbReference>
<dbReference type="PDB" id="8FC1">
    <property type="method" value="X-ray"/>
    <property type="resolution" value="2.50 A"/>
    <property type="chains" value="1g/2g=1-156"/>
</dbReference>
<dbReference type="PDB" id="8FC2">
    <property type="method" value="X-ray"/>
    <property type="resolution" value="2.50 A"/>
    <property type="chains" value="1g/2g=1-156"/>
</dbReference>
<dbReference type="PDB" id="8FC3">
    <property type="method" value="X-ray"/>
    <property type="resolution" value="2.60 A"/>
    <property type="chains" value="1g/2g=1-156"/>
</dbReference>
<dbReference type="PDB" id="8FC4">
    <property type="method" value="X-ray"/>
    <property type="resolution" value="2.45 A"/>
    <property type="chains" value="1g/2g=1-156"/>
</dbReference>
<dbReference type="PDB" id="8FC5">
    <property type="method" value="X-ray"/>
    <property type="resolution" value="2.65 A"/>
    <property type="chains" value="1g/2g=1-156"/>
</dbReference>
<dbReference type="PDB" id="8FC6">
    <property type="method" value="X-ray"/>
    <property type="resolution" value="2.35 A"/>
    <property type="chains" value="1g/2g=1-156"/>
</dbReference>
<dbReference type="PDB" id="8FOM">
    <property type="method" value="X-ray"/>
    <property type="resolution" value="3.58 A"/>
    <property type="chains" value="QG/XG=1-156"/>
</dbReference>
<dbReference type="PDB" id="8FON">
    <property type="method" value="X-ray"/>
    <property type="resolution" value="3.64 A"/>
    <property type="chains" value="QG/XG=1-156"/>
</dbReference>
<dbReference type="PDB" id="8G29">
    <property type="method" value="X-ray"/>
    <property type="resolution" value="2.55 A"/>
    <property type="chains" value="1g/2g=1-156"/>
</dbReference>
<dbReference type="PDB" id="8G2A">
    <property type="method" value="X-ray"/>
    <property type="resolution" value="2.45 A"/>
    <property type="chains" value="1g/2g=1-156"/>
</dbReference>
<dbReference type="PDB" id="8G2B">
    <property type="method" value="X-ray"/>
    <property type="resolution" value="2.55 A"/>
    <property type="chains" value="1g/2g=1-156"/>
</dbReference>
<dbReference type="PDB" id="8G2C">
    <property type="method" value="X-ray"/>
    <property type="resolution" value="2.65 A"/>
    <property type="chains" value="1g/2g=1-156"/>
</dbReference>
<dbReference type="PDB" id="8G2D">
    <property type="method" value="X-ray"/>
    <property type="resolution" value="2.70 A"/>
    <property type="chains" value="1g/2g=1-156"/>
</dbReference>
<dbReference type="PDB" id="8T8B">
    <property type="method" value="X-ray"/>
    <property type="resolution" value="2.65 A"/>
    <property type="chains" value="1g/2g=1-156"/>
</dbReference>
<dbReference type="PDB" id="8T8C">
    <property type="method" value="X-ray"/>
    <property type="resolution" value="2.60 A"/>
    <property type="chains" value="1g/2g=1-156"/>
</dbReference>
<dbReference type="PDB" id="8UD6">
    <property type="method" value="X-ray"/>
    <property type="resolution" value="2.70 A"/>
    <property type="chains" value="1g/2g=1-156"/>
</dbReference>
<dbReference type="PDB" id="8UD7">
    <property type="method" value="X-ray"/>
    <property type="resolution" value="2.55 A"/>
    <property type="chains" value="1g/2g=1-156"/>
</dbReference>
<dbReference type="PDB" id="8UD8">
    <property type="method" value="X-ray"/>
    <property type="resolution" value="2.60 A"/>
    <property type="chains" value="1g/2g=1-156"/>
</dbReference>
<dbReference type="PDB" id="8UVR">
    <property type="method" value="X-ray"/>
    <property type="resolution" value="2.60 A"/>
    <property type="chains" value="1g/2g=1-156"/>
</dbReference>
<dbReference type="PDB" id="8UVS">
    <property type="method" value="X-ray"/>
    <property type="resolution" value="2.75 A"/>
    <property type="chains" value="1g/2g=1-156"/>
</dbReference>
<dbReference type="PDB" id="8VTU">
    <property type="method" value="X-ray"/>
    <property type="resolution" value="2.40 A"/>
    <property type="chains" value="1g/2g=1-156"/>
</dbReference>
<dbReference type="PDB" id="8VTV">
    <property type="method" value="X-ray"/>
    <property type="resolution" value="2.55 A"/>
    <property type="chains" value="1g/2g=1-156"/>
</dbReference>
<dbReference type="PDB" id="8VTW">
    <property type="method" value="X-ray"/>
    <property type="resolution" value="2.35 A"/>
    <property type="chains" value="1g/2g=1-156"/>
</dbReference>
<dbReference type="PDB" id="8VTX">
    <property type="method" value="X-ray"/>
    <property type="resolution" value="2.40 A"/>
    <property type="chains" value="1g/2g=1-156"/>
</dbReference>
<dbReference type="PDB" id="8VTY">
    <property type="method" value="X-ray"/>
    <property type="resolution" value="2.60 A"/>
    <property type="chains" value="1g/2g=1-156"/>
</dbReference>
<dbReference type="PDB" id="9B00">
    <property type="method" value="X-ray"/>
    <property type="resolution" value="2.80 A"/>
    <property type="chains" value="1g/2g=1-156"/>
</dbReference>
<dbReference type="PDB" id="9D0J">
    <property type="method" value="X-ray"/>
    <property type="resolution" value="2.50 A"/>
    <property type="chains" value="1g/2g=1-156"/>
</dbReference>
<dbReference type="PDB" id="9D7R">
    <property type="method" value="X-ray"/>
    <property type="resolution" value="2.70 A"/>
    <property type="chains" value="1g/2g=1-156"/>
</dbReference>
<dbReference type="PDB" id="9D7S">
    <property type="method" value="X-ray"/>
    <property type="resolution" value="2.85 A"/>
    <property type="chains" value="1g/2g=1-156"/>
</dbReference>
<dbReference type="PDB" id="9D7T">
    <property type="method" value="X-ray"/>
    <property type="resolution" value="2.70 A"/>
    <property type="chains" value="1g/2g=1-156"/>
</dbReference>
<dbReference type="PDB" id="9DFC">
    <property type="method" value="X-ray"/>
    <property type="resolution" value="2.50 A"/>
    <property type="chains" value="1g/2g=1-156"/>
</dbReference>
<dbReference type="PDB" id="9DFD">
    <property type="method" value="X-ray"/>
    <property type="resolution" value="2.60 A"/>
    <property type="chains" value="1g/2g=1-156"/>
</dbReference>
<dbReference type="PDB" id="9DFE">
    <property type="method" value="X-ray"/>
    <property type="resolution" value="2.60 A"/>
    <property type="chains" value="1g/2g=1-156"/>
</dbReference>
<dbReference type="PDBsum" id="1DV4"/>
<dbReference type="PDBsum" id="1FJG"/>
<dbReference type="PDBsum" id="1FKA"/>
<dbReference type="PDBsum" id="1HNW"/>
<dbReference type="PDBsum" id="1HNX"/>
<dbReference type="PDBsum" id="1HNZ"/>
<dbReference type="PDBsum" id="1HR0"/>
<dbReference type="PDBsum" id="1I94"/>
<dbReference type="PDBsum" id="1I95"/>
<dbReference type="PDBsum" id="1I96"/>
<dbReference type="PDBsum" id="1I97"/>
<dbReference type="PDBsum" id="1IBK"/>
<dbReference type="PDBsum" id="1IBL"/>
<dbReference type="PDBsum" id="1IBM"/>
<dbReference type="PDBsum" id="1J5E"/>
<dbReference type="PDBsum" id="1JGO"/>
<dbReference type="PDBsum" id="1JGP"/>
<dbReference type="PDBsum" id="1JGQ"/>
<dbReference type="PDBsum" id="1ML5"/>
<dbReference type="PDBsum" id="1N32"/>
<dbReference type="PDBsum" id="1N33"/>
<dbReference type="PDBsum" id="1N34"/>
<dbReference type="PDBsum" id="1N36"/>
<dbReference type="PDBsum" id="1QD7"/>
<dbReference type="PDBsum" id="1RSS"/>
<dbReference type="PDBsum" id="1VVJ"/>
<dbReference type="PDBsum" id="1VY4"/>
<dbReference type="PDBsum" id="1VY5"/>
<dbReference type="PDBsum" id="1VY6"/>
<dbReference type="PDBsum" id="1VY7"/>
<dbReference type="PDBsum" id="1X18"/>
<dbReference type="PDBsum" id="1XMO"/>
<dbReference type="PDBsum" id="1XMQ"/>
<dbReference type="PDBsum" id="1XNQ"/>
<dbReference type="PDBsum" id="1XNR"/>
<dbReference type="PDBsum" id="2E5L"/>
<dbReference type="PDBsum" id="2F4V"/>
<dbReference type="PDBsum" id="2HHH"/>
<dbReference type="PDBsum" id="2UU9"/>
<dbReference type="PDBsum" id="2UUA"/>
<dbReference type="PDBsum" id="2UUB"/>
<dbReference type="PDBsum" id="2UUC"/>
<dbReference type="PDBsum" id="2UXB"/>
<dbReference type="PDBsum" id="2UXC"/>
<dbReference type="PDBsum" id="2UXD"/>
<dbReference type="PDBsum" id="2VQE"/>
<dbReference type="PDBsum" id="2VQF"/>
<dbReference type="PDBsum" id="2ZM6"/>
<dbReference type="PDBsum" id="3OTO"/>
<dbReference type="PDBsum" id="3T1H"/>
<dbReference type="PDBsum" id="3T1Y"/>
<dbReference type="PDBsum" id="4AQY"/>
<dbReference type="PDBsum" id="4B3M"/>
<dbReference type="PDBsum" id="4B3R"/>
<dbReference type="PDBsum" id="4B3S"/>
<dbReference type="PDBsum" id="4B3T"/>
<dbReference type="PDBsum" id="4DR1"/>
<dbReference type="PDBsum" id="4DR2"/>
<dbReference type="PDBsum" id="4DR3"/>
<dbReference type="PDBsum" id="4DR4"/>
<dbReference type="PDBsum" id="4DR5"/>
<dbReference type="PDBsum" id="4DR6"/>
<dbReference type="PDBsum" id="4DR7"/>
<dbReference type="PDBsum" id="4DUY"/>
<dbReference type="PDBsum" id="4DUZ"/>
<dbReference type="PDBsum" id="4DV0"/>
<dbReference type="PDBsum" id="4DV1"/>
<dbReference type="PDBsum" id="4DV2"/>
<dbReference type="PDBsum" id="4DV3"/>
<dbReference type="PDBsum" id="4DV4"/>
<dbReference type="PDBsum" id="4DV5"/>
<dbReference type="PDBsum" id="4DV6"/>
<dbReference type="PDBsum" id="4DV7"/>
<dbReference type="PDBsum" id="4GKJ"/>
<dbReference type="PDBsum" id="4GKK"/>
<dbReference type="PDBsum" id="4JI0"/>
<dbReference type="PDBsum" id="4JI1"/>
<dbReference type="PDBsum" id="4JI2"/>
<dbReference type="PDBsum" id="4JI3"/>
<dbReference type="PDBsum" id="4JI4"/>
<dbReference type="PDBsum" id="4JI5"/>
<dbReference type="PDBsum" id="4JI6"/>
<dbReference type="PDBsum" id="4JI7"/>
<dbReference type="PDBsum" id="4JI8"/>
<dbReference type="PDBsum" id="4JV5"/>
<dbReference type="PDBsum" id="4JYA"/>
<dbReference type="PDBsum" id="4K0K"/>
<dbReference type="PDBsum" id="4KHP"/>
<dbReference type="PDBsum" id="4L47"/>
<dbReference type="PDBsum" id="4L71"/>
<dbReference type="PDBsum" id="4LEL"/>
<dbReference type="PDBsum" id="4LF4"/>
<dbReference type="PDBsum" id="4LF5"/>
<dbReference type="PDBsum" id="4LF6"/>
<dbReference type="PDBsum" id="4LF7"/>
<dbReference type="PDBsum" id="4LF8"/>
<dbReference type="PDBsum" id="4LF9"/>
<dbReference type="PDBsum" id="4LFA"/>
<dbReference type="PDBsum" id="4LFB"/>
<dbReference type="PDBsum" id="4LFC"/>
<dbReference type="PDBsum" id="4LFZ"/>
<dbReference type="PDBsum" id="4LNT"/>
<dbReference type="PDBsum" id="4LSK"/>
<dbReference type="PDBsum" id="4LT8"/>
<dbReference type="PDBsum" id="4NXM"/>
<dbReference type="PDBsum" id="4NXN"/>
<dbReference type="PDBsum" id="4OX9"/>
<dbReference type="PDBsum" id="4P6F"/>
<dbReference type="PDBsum" id="4P70"/>
<dbReference type="PDBsum" id="4TUA"/>
<dbReference type="PDBsum" id="4TUB"/>
<dbReference type="PDBsum" id="4TUC"/>
<dbReference type="PDBsum" id="4TUD"/>
<dbReference type="PDBsum" id="4TUE"/>
<dbReference type="PDBsum" id="4V42"/>
<dbReference type="PDBsum" id="4V49"/>
<dbReference type="PDBsum" id="4V4A"/>
<dbReference type="PDBsum" id="4V4I"/>
<dbReference type="PDBsum" id="4V4P"/>
<dbReference type="PDBsum" id="4V4R"/>
<dbReference type="PDBsum" id="4V4S"/>
<dbReference type="PDBsum" id="4V4T"/>
<dbReference type="PDBsum" id="4V4X"/>
<dbReference type="PDBsum" id="4V4Y"/>
<dbReference type="PDBsum" id="4V4Z"/>
<dbReference type="PDBsum" id="4V51"/>
<dbReference type="PDBsum" id="4V5A"/>
<dbReference type="PDBsum" id="4V5C"/>
<dbReference type="PDBsum" id="4V5D"/>
<dbReference type="PDBsum" id="4V5E"/>
<dbReference type="PDBsum" id="4V5F"/>
<dbReference type="PDBsum" id="4V5G"/>
<dbReference type="PDBsum" id="4V5J"/>
<dbReference type="PDBsum" id="4V5K"/>
<dbReference type="PDBsum" id="4V5L"/>
<dbReference type="PDBsum" id="4V5M"/>
<dbReference type="PDBsum" id="4V5N"/>
<dbReference type="PDBsum" id="4V5P"/>
<dbReference type="PDBsum" id="4V5Q"/>
<dbReference type="PDBsum" id="4V5R"/>
<dbReference type="PDBsum" id="4V5S"/>
<dbReference type="PDBsum" id="4V68"/>
<dbReference type="PDBsum" id="4V6A"/>
<dbReference type="PDBsum" id="4V6F"/>
<dbReference type="PDBsum" id="4V6G"/>
<dbReference type="PDBsum" id="4V7J"/>
<dbReference type="PDBsum" id="4V7K"/>
<dbReference type="PDBsum" id="4V7L"/>
<dbReference type="PDBsum" id="4V7M"/>
<dbReference type="PDBsum" id="4V7W"/>
<dbReference type="PDBsum" id="4V7X"/>
<dbReference type="PDBsum" id="4V7Y"/>
<dbReference type="PDBsum" id="4V7Z"/>
<dbReference type="PDBsum" id="4V87"/>
<dbReference type="PDBsum" id="4V8A"/>
<dbReference type="PDBsum" id="4V8B"/>
<dbReference type="PDBsum" id="4V8C"/>
<dbReference type="PDBsum" id="4V8D"/>
<dbReference type="PDBsum" id="4V8E"/>
<dbReference type="PDBsum" id="4V8F"/>
<dbReference type="PDBsum" id="4V8G"/>
<dbReference type="PDBsum" id="4V8H"/>
<dbReference type="PDBsum" id="4V8I"/>
<dbReference type="PDBsum" id="4V8J"/>
<dbReference type="PDBsum" id="4V8N"/>
<dbReference type="PDBsum" id="4V8O"/>
<dbReference type="PDBsum" id="4V8Q"/>
<dbReference type="PDBsum" id="4V8U"/>
<dbReference type="PDBsum" id="4V8X"/>
<dbReference type="PDBsum" id="4V90"/>
<dbReference type="PDBsum" id="4V95"/>
<dbReference type="PDBsum" id="4V97"/>
<dbReference type="PDBsum" id="4V9A"/>
<dbReference type="PDBsum" id="4V9B"/>
<dbReference type="PDBsum" id="4V9H"/>
<dbReference type="PDBsum" id="4V9I"/>
<dbReference type="PDBsum" id="4V9R"/>
<dbReference type="PDBsum" id="4V9S"/>
<dbReference type="PDBsum" id="4W2E"/>
<dbReference type="PDBsum" id="4W2F"/>
<dbReference type="PDBsum" id="4W2G"/>
<dbReference type="PDBsum" id="4W2H"/>
<dbReference type="PDBsum" id="4W2I"/>
<dbReference type="PDBsum" id="4W4G"/>
<dbReference type="PDBsum" id="4WPO"/>
<dbReference type="PDBsum" id="4WQ1"/>
<dbReference type="PDBsum" id="4WQF"/>
<dbReference type="PDBsum" id="4WQR"/>
<dbReference type="PDBsum" id="4WQU"/>
<dbReference type="PDBsum" id="4WQY"/>
<dbReference type="PDBsum" id="4WR6"/>
<dbReference type="PDBsum" id="4WRA"/>
<dbReference type="PDBsum" id="4WRO"/>
<dbReference type="PDBsum" id="4WSD"/>
<dbReference type="PDBsum" id="4WSM"/>
<dbReference type="PDBsum" id="4WT1"/>
<dbReference type="PDBsum" id="4WT8"/>
<dbReference type="PDBsum" id="4WU1"/>
<dbReference type="PDBsum" id="4WZD"/>
<dbReference type="PDBsum" id="4WZO"/>
<dbReference type="PDBsum" id="4X62"/>
<dbReference type="PDBsum" id="4X64"/>
<dbReference type="PDBsum" id="4X65"/>
<dbReference type="PDBsum" id="4X66"/>
<dbReference type="PDBsum" id="4Y4O"/>
<dbReference type="PDBsum" id="4Y4P"/>
<dbReference type="PDBsum" id="4YHH"/>
<dbReference type="PDBsum" id="4YPB"/>
<dbReference type="PDBsum" id="4YY3"/>
<dbReference type="PDBsum" id="4YZV"/>
<dbReference type="PDBsum" id="4Z3S"/>
<dbReference type="PDBsum" id="4Z8C"/>
<dbReference type="PDBsum" id="4ZER"/>
<dbReference type="PDBsum" id="4ZSN"/>
<dbReference type="PDBsum" id="5A9Z"/>
<dbReference type="PDBsum" id="5AA0"/>
<dbReference type="PDBsum" id="5BR8"/>
<dbReference type="PDBsum" id="5CZP"/>
<dbReference type="PDBsum" id="5D8B"/>
<dbReference type="PDBsum" id="5DFE"/>
<dbReference type="PDBsum" id="5DOX"/>
<dbReference type="PDBsum" id="5DOY"/>
<dbReference type="PDBsum" id="5E7K"/>
<dbReference type="PDBsum" id="5E81"/>
<dbReference type="PDBsum" id="5EL4"/>
<dbReference type="PDBsum" id="5EL5"/>
<dbReference type="PDBsum" id="5EL6"/>
<dbReference type="PDBsum" id="5EL7"/>
<dbReference type="PDBsum" id="5F8K"/>
<dbReference type="PDBsum" id="5FDU"/>
<dbReference type="PDBsum" id="5FDV"/>
<dbReference type="PDBsum" id="5HAU"/>
<dbReference type="PDBsum" id="5HCP"/>
<dbReference type="PDBsum" id="5HCQ"/>
<dbReference type="PDBsum" id="5HCR"/>
<dbReference type="PDBsum" id="5HD1"/>
<dbReference type="PDBsum" id="5IB7"/>
<dbReference type="PDBsum" id="5IB8"/>
<dbReference type="PDBsum" id="5IBB"/>
<dbReference type="PDBsum" id="5IMQ"/>
<dbReference type="PDBsum" id="5IMR"/>
<dbReference type="PDBsum" id="5IWA"/>
<dbReference type="PDBsum" id="5J30"/>
<dbReference type="PDBsum" id="5J3C"/>
<dbReference type="PDBsum" id="5J4B"/>
<dbReference type="PDBsum" id="5J4C"/>
<dbReference type="PDBsum" id="5J8B"/>
<dbReference type="PDBsum" id="5LMN"/>
<dbReference type="PDBsum" id="5LMO"/>
<dbReference type="PDBsum" id="5LMP"/>
<dbReference type="PDBsum" id="5LMQ"/>
<dbReference type="PDBsum" id="5LMR"/>
<dbReference type="PDBsum" id="5LMS"/>
<dbReference type="PDBsum" id="5LMT"/>
<dbReference type="PDBsum" id="5LMU"/>
<dbReference type="PDBsum" id="5LMV"/>
<dbReference type="PDBsum" id="5NDJ"/>
<dbReference type="PDBsum" id="5NDK"/>
<dbReference type="PDBsum" id="5OT7"/>
<dbReference type="PDBsum" id="5UQ7"/>
<dbReference type="PDBsum" id="5UQ8"/>
<dbReference type="PDBsum" id="5VP2"/>
<dbReference type="PDBsum" id="5VPO"/>
<dbReference type="PDBsum" id="5VPP"/>
<dbReference type="PDBsum" id="5W4K"/>
<dbReference type="PDBsum" id="5WIS"/>
<dbReference type="PDBsum" id="5WIT"/>
<dbReference type="PDBsum" id="5WNP"/>
<dbReference type="PDBsum" id="5WNQ"/>
<dbReference type="PDBsum" id="5WNR"/>
<dbReference type="PDBsum" id="5WNS"/>
<dbReference type="PDBsum" id="5WNT"/>
<dbReference type="PDBsum" id="5WNU"/>
<dbReference type="PDBsum" id="5WNV"/>
<dbReference type="PDBsum" id="5ZLU"/>
<dbReference type="PDBsum" id="6BUW"/>
<dbReference type="PDBsum" id="6BZ6"/>
<dbReference type="PDBsum" id="6BZ7"/>
<dbReference type="PDBsum" id="6BZ8"/>
<dbReference type="PDBsum" id="6C5L"/>
<dbReference type="PDBsum" id="6CAE"/>
<dbReference type="PDBsum" id="6CAO"/>
<dbReference type="PDBsum" id="6CAP"/>
<dbReference type="PDBsum" id="6CAQ"/>
<dbReference type="PDBsum" id="6CAR"/>
<dbReference type="PDBsum" id="6CAS"/>
<dbReference type="PDBsum" id="6CFJ"/>
<dbReference type="PDBsum" id="6CFK"/>
<dbReference type="PDBsum" id="6CFL"/>
<dbReference type="PDBsum" id="6CZR"/>
<dbReference type="PDBsum" id="6DTI"/>
<dbReference type="PDBsum" id="6FKR"/>
<dbReference type="PDBsum" id="6GSJ"/>
<dbReference type="PDBsum" id="6GSK"/>
<dbReference type="PDBsum" id="6GSL"/>
<dbReference type="PDBsum" id="6GZQ"/>
<dbReference type="PDBsum" id="6GZX"/>
<dbReference type="PDBsum" id="6GZZ"/>
<dbReference type="PDBsum" id="6MKN"/>
<dbReference type="PDBsum" id="6MPF"/>
<dbReference type="PDBsum" id="6MPI"/>
<dbReference type="PDBsum" id="6N9E"/>
<dbReference type="PDBsum" id="6N9F"/>
<dbReference type="PDBsum" id="6ND5"/>
<dbReference type="PDBsum" id="6ND6"/>
<dbReference type="PDBsum" id="6NDK"/>
<dbReference type="PDBsum" id="6NSH"/>
<dbReference type="PDBsum" id="6NTA"/>
<dbReference type="PDBsum" id="6NUO"/>
<dbReference type="PDBsum" id="6NWY"/>
<dbReference type="PDBsum" id="6NY6"/>
<dbReference type="PDBsum" id="6O3M"/>
<dbReference type="PDBsum" id="6O97"/>
<dbReference type="PDBsum" id="6OF1"/>
<dbReference type="PDBsum" id="6OF6"/>
<dbReference type="PDBsum" id="6OJ2"/>
<dbReference type="PDBsum" id="6OPE"/>
<dbReference type="PDBsum" id="6ORD"/>
<dbReference type="PDBsum" id="6OSI"/>
<dbReference type="PDBsum" id="6OTR"/>
<dbReference type="PDBsum" id="6OXA"/>
<dbReference type="PDBsum" id="6OXI"/>
<dbReference type="PDBsum" id="6Q95"/>
<dbReference type="PDBsum" id="6QNQ"/>
<dbReference type="PDBsum" id="6QNR"/>
<dbReference type="PDBsum" id="6UCQ"/>
<dbReference type="PDBsum" id="6UO1"/>
<dbReference type="PDBsum" id="6XHV"/>
<dbReference type="PDBsum" id="6XHW"/>
<dbReference type="PDBsum" id="6XHX"/>
<dbReference type="PDBsum" id="6XHY"/>
<dbReference type="PDBsum" id="6XQD"/>
<dbReference type="PDBsum" id="6XQE"/>
<dbReference type="PDBsum" id="7AZO"/>
<dbReference type="PDBsum" id="7AZS"/>
<dbReference type="PDBsum" id="7DUG"/>
<dbReference type="PDBsum" id="7DUH"/>
<dbReference type="PDBsum" id="7DUI"/>
<dbReference type="PDBsum" id="7DUJ"/>
<dbReference type="PDBsum" id="7DUK"/>
<dbReference type="PDBsum" id="7DUL"/>
<dbReference type="PDBsum" id="7JQL"/>
<dbReference type="PDBsum" id="7JQM"/>
<dbReference type="PDBsum" id="7LH5"/>
<dbReference type="PDBsum" id="7MD7"/>
<dbReference type="PDBsum" id="7RQ8"/>
<dbReference type="PDBsum" id="7RQ9"/>
<dbReference type="PDBsum" id="7RQA"/>
<dbReference type="PDBsum" id="7RQB"/>
<dbReference type="PDBsum" id="7RQC"/>
<dbReference type="PDBsum" id="7RQD"/>
<dbReference type="PDBsum" id="7RQE"/>
<dbReference type="PDBsum" id="7U2H"/>
<dbReference type="PDBsum" id="7U2I"/>
<dbReference type="PDBsum" id="7U2J"/>
<dbReference type="PDBsum" id="7V2L"/>
<dbReference type="PDBsum" id="7V2M"/>
<dbReference type="PDBsum" id="7V2N"/>
<dbReference type="PDBsum" id="7V2O"/>
<dbReference type="PDBsum" id="7V2P"/>
<dbReference type="PDBsum" id="7V2Q"/>
<dbReference type="PDBsum" id="8CVJ"/>
<dbReference type="PDBsum" id="8CVK"/>
<dbReference type="PDBsum" id="8CVL"/>
<dbReference type="PDBsum" id="8EKB"/>
<dbReference type="PDBsum" id="8EV6"/>
<dbReference type="PDBsum" id="8EV7"/>
<dbReference type="PDBsum" id="8FC1"/>
<dbReference type="PDBsum" id="8FC2"/>
<dbReference type="PDBsum" id="8FC3"/>
<dbReference type="PDBsum" id="8FC4"/>
<dbReference type="PDBsum" id="8FC5"/>
<dbReference type="PDBsum" id="8FC6"/>
<dbReference type="PDBsum" id="8FOM"/>
<dbReference type="PDBsum" id="8FON"/>
<dbReference type="PDBsum" id="8G29"/>
<dbReference type="PDBsum" id="8G2A"/>
<dbReference type="PDBsum" id="8G2B"/>
<dbReference type="PDBsum" id="8G2C"/>
<dbReference type="PDBsum" id="8G2D"/>
<dbReference type="PDBsum" id="8T8B"/>
<dbReference type="PDBsum" id="8T8C"/>
<dbReference type="PDBsum" id="8UD6"/>
<dbReference type="PDBsum" id="8UD7"/>
<dbReference type="PDBsum" id="8UD8"/>
<dbReference type="PDBsum" id="8UVR"/>
<dbReference type="PDBsum" id="8UVS"/>
<dbReference type="PDBsum" id="8VTU"/>
<dbReference type="PDBsum" id="8VTV"/>
<dbReference type="PDBsum" id="8VTW"/>
<dbReference type="PDBsum" id="8VTX"/>
<dbReference type="PDBsum" id="8VTY"/>
<dbReference type="PDBsum" id="9B00"/>
<dbReference type="PDBsum" id="9D0J"/>
<dbReference type="PDBsum" id="9D7R"/>
<dbReference type="PDBsum" id="9D7S"/>
<dbReference type="PDBsum" id="9D7T"/>
<dbReference type="PDBsum" id="9DFC"/>
<dbReference type="PDBsum" id="9DFD"/>
<dbReference type="PDBsum" id="9DFE"/>
<dbReference type="EMDB" id="EMD-0101"/>
<dbReference type="EMDB" id="EMD-0104"/>
<dbReference type="EMDB" id="EMD-0105"/>
<dbReference type="EMDB" id="EMD-31655"/>
<dbReference type="EMDB" id="EMD-31656"/>
<dbReference type="EMDB" id="EMD-31657"/>
<dbReference type="EMDB" id="EMD-31658"/>
<dbReference type="EMDB" id="EMD-31659"/>
<dbReference type="EMDB" id="EMD-31660"/>
<dbReference type="EMDB" id="EMD-3852"/>
<dbReference type="EMDB" id="EMD-4073"/>
<dbReference type="EMDB" id="EMD-4074"/>
<dbReference type="EMDB" id="EMD-4075"/>
<dbReference type="EMDB" id="EMD-4076"/>
<dbReference type="EMDB" id="EMD-4077"/>
<dbReference type="EMDB" id="EMD-4078"/>
<dbReference type="EMDB" id="EMD-4079"/>
<dbReference type="EMDB" id="EMD-4080"/>
<dbReference type="EMDB" id="EMD-4083"/>
<dbReference type="EMDB" id="EMD-4475"/>
<dbReference type="EMDB" id="EMD-6934"/>
<dbReference type="EMDB" id="EMD-8596"/>
<dbReference type="EMDB" id="EMD-8597"/>
<dbReference type="SMR" id="P17291"/>
<dbReference type="IntAct" id="P17291">
    <property type="interactions" value="11"/>
</dbReference>
<dbReference type="MINT" id="P17291"/>
<dbReference type="DrugBank" id="DB08185">
    <property type="generic name" value="2-METHYLTHIO-N6-ISOPENTENYL-ADENOSINE-5'-MONOPHOSPHATE"/>
</dbReference>
<dbReference type="EnsemblBacteria" id="BAD71519">
    <property type="protein sequence ID" value="BAD71519"/>
    <property type="gene ID" value="BAD71519"/>
</dbReference>
<dbReference type="GeneID" id="3167931"/>
<dbReference type="KEGG" id="ttj:TTHA1696"/>
<dbReference type="PATRIC" id="fig|300852.9.peg.1666"/>
<dbReference type="eggNOG" id="COG0049">
    <property type="taxonomic scope" value="Bacteria"/>
</dbReference>
<dbReference type="HOGENOM" id="CLU_072226_1_1_0"/>
<dbReference type="PhylomeDB" id="P17291"/>
<dbReference type="EvolutionaryTrace" id="P17291"/>
<dbReference type="Proteomes" id="UP000000532">
    <property type="component" value="Chromosome"/>
</dbReference>
<dbReference type="GO" id="GO:0015935">
    <property type="term" value="C:small ribosomal subunit"/>
    <property type="evidence" value="ECO:0007669"/>
    <property type="project" value="InterPro"/>
</dbReference>
<dbReference type="GO" id="GO:0019843">
    <property type="term" value="F:rRNA binding"/>
    <property type="evidence" value="ECO:0007669"/>
    <property type="project" value="UniProtKB-UniRule"/>
</dbReference>
<dbReference type="GO" id="GO:0003735">
    <property type="term" value="F:structural constituent of ribosome"/>
    <property type="evidence" value="ECO:0007669"/>
    <property type="project" value="InterPro"/>
</dbReference>
<dbReference type="GO" id="GO:0000049">
    <property type="term" value="F:tRNA binding"/>
    <property type="evidence" value="ECO:0007669"/>
    <property type="project" value="UniProtKB-UniRule"/>
</dbReference>
<dbReference type="GO" id="GO:0006412">
    <property type="term" value="P:translation"/>
    <property type="evidence" value="ECO:0007669"/>
    <property type="project" value="UniProtKB-UniRule"/>
</dbReference>
<dbReference type="CDD" id="cd14869">
    <property type="entry name" value="uS7_Bacteria"/>
    <property type="match status" value="1"/>
</dbReference>
<dbReference type="FunFam" id="1.10.455.10:FF:000001">
    <property type="entry name" value="30S ribosomal protein S7"/>
    <property type="match status" value="1"/>
</dbReference>
<dbReference type="Gene3D" id="1.10.455.10">
    <property type="entry name" value="Ribosomal protein S7 domain"/>
    <property type="match status" value="1"/>
</dbReference>
<dbReference type="HAMAP" id="MF_00480_B">
    <property type="entry name" value="Ribosomal_uS7_B"/>
    <property type="match status" value="1"/>
</dbReference>
<dbReference type="InterPro" id="IPR000235">
    <property type="entry name" value="Ribosomal_uS7"/>
</dbReference>
<dbReference type="InterPro" id="IPR005717">
    <property type="entry name" value="Ribosomal_uS7_bac/org-type"/>
</dbReference>
<dbReference type="InterPro" id="IPR020606">
    <property type="entry name" value="Ribosomal_uS7_CS"/>
</dbReference>
<dbReference type="InterPro" id="IPR023798">
    <property type="entry name" value="Ribosomal_uS7_dom"/>
</dbReference>
<dbReference type="InterPro" id="IPR036823">
    <property type="entry name" value="Ribosomal_uS7_dom_sf"/>
</dbReference>
<dbReference type="NCBIfam" id="TIGR01029">
    <property type="entry name" value="rpsG_bact"/>
    <property type="match status" value="1"/>
</dbReference>
<dbReference type="PANTHER" id="PTHR11205">
    <property type="entry name" value="RIBOSOMAL PROTEIN S7"/>
    <property type="match status" value="1"/>
</dbReference>
<dbReference type="Pfam" id="PF00177">
    <property type="entry name" value="Ribosomal_S7"/>
    <property type="match status" value="1"/>
</dbReference>
<dbReference type="PIRSF" id="PIRSF002122">
    <property type="entry name" value="RPS7p_RPS7a_RPS5e_RPS7o"/>
    <property type="match status" value="1"/>
</dbReference>
<dbReference type="SUPFAM" id="SSF47973">
    <property type="entry name" value="Ribosomal protein S7"/>
    <property type="match status" value="1"/>
</dbReference>
<dbReference type="PROSITE" id="PS00052">
    <property type="entry name" value="RIBOSOMAL_S7"/>
    <property type="match status" value="1"/>
</dbReference>
<comment type="function">
    <text>One of the primary rRNA binding proteins, it binds directly to 3'-end of the 16S rRNA where it nucleates assembly of the head domain of the 30S subunit. Is located at the subunit interface close to the decoding center. Binds mRNA and the E site tRNA blocking its exit path in the ribosome. This blockage implies that this section of the ribosome must be able to move to release the deacetylated tRNA.</text>
</comment>
<comment type="subunit">
    <text>Part of the 30S ribosomal subunit. Contacts proteins S9 and S11. Binds to the C-terminus of IF3 and to the C-terminus of Era.</text>
</comment>
<comment type="mass spectrometry" mass="17886.0" method="MALDI" evidence="1"/>
<comment type="similarity">
    <text evidence="3">Belongs to the universal ribosomal protein uS7 family.</text>
</comment>
<evidence type="ECO:0000269" key="1">
    <source>
    </source>
</evidence>
<evidence type="ECO:0000269" key="2">
    <source>
    </source>
</evidence>
<evidence type="ECO:0000305" key="3"/>
<evidence type="ECO:0007829" key="4">
    <source>
        <dbReference type="PDB" id="1RSS"/>
    </source>
</evidence>
<evidence type="ECO:0007829" key="5">
    <source>
        <dbReference type="PDB" id="2VQE"/>
    </source>
</evidence>
<evidence type="ECO:0007829" key="6">
    <source>
        <dbReference type="PDB" id="4JV5"/>
    </source>
</evidence>
<feature type="initiator methionine" description="Removed" evidence="2">
    <location>
        <position position="1"/>
    </location>
</feature>
<feature type="chain" id="PRO_0000124369" description="Small ribosomal subunit protein uS7">
    <location>
        <begin position="2"/>
        <end position="156"/>
    </location>
</feature>
<feature type="turn" evidence="4">
    <location>
        <begin position="16"/>
        <end position="18"/>
    </location>
</feature>
<feature type="helix" evidence="4">
    <location>
        <begin position="21"/>
        <end position="30"/>
    </location>
</feature>
<feature type="helix" evidence="4">
    <location>
        <begin position="36"/>
        <end position="54"/>
    </location>
</feature>
<feature type="helix" evidence="4">
    <location>
        <begin position="58"/>
        <end position="69"/>
    </location>
</feature>
<feature type="strand" evidence="4">
    <location>
        <begin position="72"/>
        <end position="80"/>
    </location>
</feature>
<feature type="strand" evidence="4">
    <location>
        <begin position="83"/>
        <end position="90"/>
    </location>
</feature>
<feature type="helix" evidence="4">
    <location>
        <begin position="93"/>
        <end position="108"/>
    </location>
</feature>
<feature type="strand" evidence="6">
    <location>
        <begin position="111"/>
        <end position="115"/>
    </location>
</feature>
<feature type="helix" evidence="4">
    <location>
        <begin position="116"/>
        <end position="128"/>
    </location>
</feature>
<feature type="helix" evidence="4">
    <location>
        <begin position="133"/>
        <end position="145"/>
    </location>
</feature>
<feature type="helix" evidence="5">
    <location>
        <begin position="149"/>
        <end position="154"/>
    </location>
</feature>
<name>RS7_THET8</name>
<accession>P17291</accession>
<accession>Q5SHN4</accession>